<dbReference type="EMBL" id="S74736">
    <property type="protein sequence ID" value="AAB20782.1"/>
    <property type="molecule type" value="Genomic_DNA"/>
</dbReference>
<dbReference type="EMBL" id="X67290">
    <property type="protein sequence ID" value="CAA47706.1"/>
    <property type="molecule type" value="Genomic_DNA"/>
</dbReference>
<dbReference type="EMBL" id="U14003">
    <property type="protein sequence ID" value="AAA97133.1"/>
    <property type="status" value="ALT_INIT"/>
    <property type="molecule type" value="Genomic_DNA"/>
</dbReference>
<dbReference type="PIR" id="S19544">
    <property type="entry name" value="CBEC62"/>
</dbReference>
<dbReference type="RefSeq" id="WP_001232240.1">
    <property type="nucleotide sequence ID" value="NZ_WXZA01000002.1"/>
</dbReference>
<dbReference type="PDB" id="1APC">
    <property type="method" value="NMR"/>
    <property type="chains" value="A=23-128"/>
</dbReference>
<dbReference type="PDB" id="1LM3">
    <property type="method" value="X-ray"/>
    <property type="resolution" value="2.70 A"/>
    <property type="chains" value="B/D=23-128"/>
</dbReference>
<dbReference type="PDB" id="1M6T">
    <property type="method" value="X-ray"/>
    <property type="resolution" value="1.81 A"/>
    <property type="chains" value="A=23-128"/>
</dbReference>
<dbReference type="PDB" id="1QPU">
    <property type="method" value="NMR"/>
    <property type="chains" value="A=23-128"/>
</dbReference>
<dbReference type="PDB" id="1QQ3">
    <property type="method" value="NMR"/>
    <property type="chains" value="A=23-128"/>
</dbReference>
<dbReference type="PDB" id="256B">
    <property type="method" value="X-ray"/>
    <property type="resolution" value="1.40 A"/>
    <property type="chains" value="A/B=23-128"/>
</dbReference>
<dbReference type="PDB" id="2BC5">
    <property type="method" value="X-ray"/>
    <property type="resolution" value="2.25 A"/>
    <property type="chains" value="A/B/C/D=23-128"/>
</dbReference>
<dbReference type="PDB" id="2QLA">
    <property type="method" value="X-ray"/>
    <property type="resolution" value="2.90 A"/>
    <property type="chains" value="A/B/C/D=23-128"/>
</dbReference>
<dbReference type="PDB" id="3C62">
    <property type="method" value="X-ray"/>
    <property type="resolution" value="1.87 A"/>
    <property type="chains" value="A/B/C/D=23-128"/>
</dbReference>
<dbReference type="PDB" id="3C63">
    <property type="method" value="X-ray"/>
    <property type="resolution" value="1.75 A"/>
    <property type="chains" value="A/B/C/D=23-128"/>
</dbReference>
<dbReference type="PDB" id="3DE8">
    <property type="method" value="X-ray"/>
    <property type="resolution" value="1.72 A"/>
    <property type="chains" value="A/B/C/D=23-128"/>
</dbReference>
<dbReference type="PDB" id="3DE9">
    <property type="method" value="X-ray"/>
    <property type="resolution" value="2.04 A"/>
    <property type="chains" value="A=23-128"/>
</dbReference>
<dbReference type="PDB" id="3FOO">
    <property type="method" value="X-ray"/>
    <property type="resolution" value="2.40 A"/>
    <property type="chains" value="A/B/C/D/E/F/G/H/I/J/K/L=23-128"/>
</dbReference>
<dbReference type="PDB" id="3FOP">
    <property type="method" value="X-ray"/>
    <property type="resolution" value="3.00 A"/>
    <property type="chains" value="A/B=23-128"/>
</dbReference>
<dbReference type="PDB" id="3HNI">
    <property type="method" value="X-ray"/>
    <property type="resolution" value="2.35 A"/>
    <property type="chains" value="A/B/C/D/E/F/G/H=23-128"/>
</dbReference>
<dbReference type="PDB" id="3HNJ">
    <property type="method" value="X-ray"/>
    <property type="resolution" value="2.00 A"/>
    <property type="chains" value="A/B/C/D=23-128"/>
</dbReference>
<dbReference type="PDB" id="3HNK">
    <property type="method" value="X-ray"/>
    <property type="resolution" value="2.10 A"/>
    <property type="chains" value="A/B=23-128"/>
</dbReference>
<dbReference type="PDB" id="3HNL">
    <property type="method" value="X-ray"/>
    <property type="resolution" value="2.20 A"/>
    <property type="chains" value="A/B=23-128"/>
</dbReference>
<dbReference type="PDB" id="3IQ5">
    <property type="method" value="X-ray"/>
    <property type="resolution" value="2.05 A"/>
    <property type="chains" value="A/B/C/D=23-128"/>
</dbReference>
<dbReference type="PDB" id="3IQ6">
    <property type="method" value="X-ray"/>
    <property type="resolution" value="2.35 A"/>
    <property type="chains" value="A/B/C/D/E/F/G/H=23-128"/>
</dbReference>
<dbReference type="PDB" id="3L1M">
    <property type="method" value="X-ray"/>
    <property type="resolution" value="2.30 A"/>
    <property type="chains" value="A=23-128"/>
</dbReference>
<dbReference type="PDB" id="3M15">
    <property type="method" value="X-ray"/>
    <property type="resolution" value="2.60 A"/>
    <property type="chains" value="A/B/C=23-128"/>
</dbReference>
<dbReference type="PDB" id="3M4B">
    <property type="method" value="X-ray"/>
    <property type="resolution" value="2.50 A"/>
    <property type="chains" value="A/B/C/D=23-128"/>
</dbReference>
<dbReference type="PDB" id="3M4C">
    <property type="method" value="X-ray"/>
    <property type="resolution" value="1.90 A"/>
    <property type="chains" value="A/B/C/D=23-128"/>
</dbReference>
<dbReference type="PDB" id="3M79">
    <property type="method" value="X-ray"/>
    <property type="resolution" value="2.10 A"/>
    <property type="chains" value="A/B/C/D/E/F/G/H=23-128"/>
</dbReference>
<dbReference type="PDB" id="3NMI">
    <property type="method" value="X-ray"/>
    <property type="resolution" value="2.01 A"/>
    <property type="chains" value="A/B/C/D/E/F=23-128"/>
</dbReference>
<dbReference type="PDB" id="3NMJ">
    <property type="method" value="X-ray"/>
    <property type="resolution" value="3.10 A"/>
    <property type="chains" value="A/B/C/D=23-128"/>
</dbReference>
<dbReference type="PDB" id="3NMK">
    <property type="method" value="X-ray"/>
    <property type="resolution" value="2.80 A"/>
    <property type="chains" value="A/B/C/D=23-128"/>
</dbReference>
<dbReference type="PDB" id="3TOL">
    <property type="method" value="X-ray"/>
    <property type="resolution" value="2.00 A"/>
    <property type="chains" value="A/B/C/D=23-128"/>
</dbReference>
<dbReference type="PDB" id="3TOM">
    <property type="method" value="X-ray"/>
    <property type="resolution" value="2.30 A"/>
    <property type="chains" value="A/B/C/D=23-128"/>
</dbReference>
<dbReference type="PDB" id="3U8P">
    <property type="method" value="X-ray"/>
    <property type="resolution" value="2.75 A"/>
    <property type="chains" value="A/B/C=23-128"/>
</dbReference>
<dbReference type="PDB" id="4EA3">
    <property type="method" value="X-ray"/>
    <property type="resolution" value="3.01 A"/>
    <property type="chains" value="A/B=23-128"/>
</dbReference>
<dbReference type="PDB" id="4EIY">
    <property type="method" value="X-ray"/>
    <property type="resolution" value="1.80 A"/>
    <property type="chains" value="A=23-128"/>
</dbReference>
<dbReference type="PDB" id="4IAQ">
    <property type="method" value="X-ray"/>
    <property type="resolution" value="2.80 A"/>
    <property type="chains" value="A=23-128"/>
</dbReference>
<dbReference type="PDB" id="4IAR">
    <property type="method" value="X-ray"/>
    <property type="resolution" value="2.70 A"/>
    <property type="chains" value="A=23-128"/>
</dbReference>
<dbReference type="PDB" id="4IB4">
    <property type="method" value="X-ray"/>
    <property type="resolution" value="2.70 A"/>
    <property type="chains" value="A=23-128"/>
</dbReference>
<dbReference type="PDB" id="4JE9">
    <property type="method" value="X-ray"/>
    <property type="resolution" value="2.12 A"/>
    <property type="chains" value="A/B=23-128"/>
</dbReference>
<dbReference type="PDB" id="4JEA">
    <property type="method" value="X-ray"/>
    <property type="resolution" value="1.22 A"/>
    <property type="chains" value="A/B/C/D=23-128"/>
</dbReference>
<dbReference type="PDB" id="4JEB">
    <property type="method" value="X-ray"/>
    <property type="resolution" value="2.30 A"/>
    <property type="chains" value="A/B=23-128"/>
</dbReference>
<dbReference type="PDB" id="4JKV">
    <property type="method" value="X-ray"/>
    <property type="resolution" value="2.45 A"/>
    <property type="chains" value="A/B=23-127"/>
</dbReference>
<dbReference type="PDB" id="4L6R">
    <property type="method" value="X-ray"/>
    <property type="resolution" value="3.30 A"/>
    <property type="chains" value="A=23-128"/>
</dbReference>
<dbReference type="PDB" id="4N6H">
    <property type="method" value="X-ray"/>
    <property type="resolution" value="1.80 A"/>
    <property type="chains" value="A=23-128"/>
</dbReference>
<dbReference type="PDB" id="4NC3">
    <property type="method" value="X-ray"/>
    <property type="resolution" value="2.80 A"/>
    <property type="chains" value="A=23-128"/>
</dbReference>
<dbReference type="PDB" id="4NTJ">
    <property type="method" value="X-ray"/>
    <property type="resolution" value="2.62 A"/>
    <property type="chains" value="A=23-128"/>
</dbReference>
<dbReference type="PDB" id="4O9R">
    <property type="method" value="X-ray"/>
    <property type="resolution" value="3.20 A"/>
    <property type="chains" value="A=23-128"/>
</dbReference>
<dbReference type="PDB" id="4OR2">
    <property type="method" value="X-ray"/>
    <property type="resolution" value="2.80 A"/>
    <property type="chains" value="A/B=23-128"/>
</dbReference>
<dbReference type="PDB" id="4PXZ">
    <property type="method" value="X-ray"/>
    <property type="resolution" value="2.50 A"/>
    <property type="chains" value="A=23-128"/>
</dbReference>
<dbReference type="PDB" id="4PY0">
    <property type="method" value="X-ray"/>
    <property type="resolution" value="3.10 A"/>
    <property type="chains" value="A=23-128"/>
</dbReference>
<dbReference type="PDB" id="4QIM">
    <property type="method" value="X-ray"/>
    <property type="resolution" value="2.61 A"/>
    <property type="chains" value="A=23-128"/>
</dbReference>
<dbReference type="PDB" id="4QIN">
    <property type="method" value="X-ray"/>
    <property type="resolution" value="2.60 A"/>
    <property type="chains" value="A=23-128"/>
</dbReference>
<dbReference type="PDB" id="4RWA">
    <property type="method" value="X-ray"/>
    <property type="resolution" value="3.28 A"/>
    <property type="chains" value="A/B=23-127"/>
</dbReference>
<dbReference type="PDB" id="4RWD">
    <property type="method" value="X-ray"/>
    <property type="resolution" value="2.70 A"/>
    <property type="chains" value="A/B=23-127"/>
</dbReference>
<dbReference type="PDB" id="4U9D">
    <property type="method" value="X-ray"/>
    <property type="resolution" value="2.50 A"/>
    <property type="chains" value="A/B/C/D=23-128"/>
</dbReference>
<dbReference type="PDB" id="4U9E">
    <property type="method" value="X-ray"/>
    <property type="resolution" value="2.80 A"/>
    <property type="chains" value="A=23-128"/>
</dbReference>
<dbReference type="PDB" id="4YAY">
    <property type="method" value="X-ray"/>
    <property type="resolution" value="2.90 A"/>
    <property type="chains" value="A=23-128"/>
</dbReference>
<dbReference type="PDB" id="4Z34">
    <property type="method" value="X-ray"/>
    <property type="resolution" value="3.00 A"/>
    <property type="chains" value="A=23-64, A=73-127"/>
</dbReference>
<dbReference type="PDB" id="4Z35">
    <property type="method" value="X-ray"/>
    <property type="resolution" value="2.90 A"/>
    <property type="chains" value="A=23-64, A=73-127"/>
</dbReference>
<dbReference type="PDB" id="4Z36">
    <property type="method" value="X-ray"/>
    <property type="resolution" value="2.90 A"/>
    <property type="chains" value="A=23-64, A=78-127"/>
</dbReference>
<dbReference type="PDB" id="4ZUD">
    <property type="method" value="X-ray"/>
    <property type="resolution" value="2.80 A"/>
    <property type="chains" value="A=23-128"/>
</dbReference>
<dbReference type="PDB" id="5AWI">
    <property type="method" value="X-ray"/>
    <property type="resolution" value="1.85 A"/>
    <property type="chains" value="A/B=23-128"/>
</dbReference>
<dbReference type="PDB" id="5BU7">
    <property type="method" value="X-ray"/>
    <property type="resolution" value="2.46 A"/>
    <property type="chains" value="A/B=23-128"/>
</dbReference>
<dbReference type="PDB" id="5DHG">
    <property type="method" value="X-ray"/>
    <property type="resolution" value="3.00 A"/>
    <property type="chains" value="A/B=23-128"/>
</dbReference>
<dbReference type="PDB" id="5DHH">
    <property type="method" value="X-ray"/>
    <property type="resolution" value="3.00 A"/>
    <property type="chains" value="A/B=23-128"/>
</dbReference>
<dbReference type="PDB" id="5IU4">
    <property type="method" value="X-ray"/>
    <property type="resolution" value="1.72 A"/>
    <property type="chains" value="A=23-128"/>
</dbReference>
<dbReference type="PDB" id="5IU7">
    <property type="method" value="X-ray"/>
    <property type="resolution" value="1.90 A"/>
    <property type="chains" value="A=23-128"/>
</dbReference>
<dbReference type="PDB" id="5IU8">
    <property type="method" value="X-ray"/>
    <property type="resolution" value="2.00 A"/>
    <property type="chains" value="A=23-128"/>
</dbReference>
<dbReference type="PDB" id="5IUA">
    <property type="method" value="X-ray"/>
    <property type="resolution" value="2.20 A"/>
    <property type="chains" value="A=23-128"/>
</dbReference>
<dbReference type="PDB" id="5IUB">
    <property type="method" value="X-ray"/>
    <property type="resolution" value="2.10 A"/>
    <property type="chains" value="A=23-128"/>
</dbReference>
<dbReference type="PDB" id="5JTB">
    <property type="method" value="X-ray"/>
    <property type="resolution" value="2.80 A"/>
    <property type="chains" value="A=27-128"/>
</dbReference>
<dbReference type="PDB" id="5K2A">
    <property type="method" value="X-ray"/>
    <property type="resolution" value="2.50 A"/>
    <property type="chains" value="A=23-128"/>
</dbReference>
<dbReference type="PDB" id="5K2B">
    <property type="method" value="X-ray"/>
    <property type="resolution" value="2.50 A"/>
    <property type="chains" value="A=23-128"/>
</dbReference>
<dbReference type="PDB" id="5K2C">
    <property type="method" value="X-ray"/>
    <property type="resolution" value="1.90 A"/>
    <property type="chains" value="A=23-128"/>
</dbReference>
<dbReference type="PDB" id="5K2D">
    <property type="method" value="X-ray"/>
    <property type="resolution" value="1.90 A"/>
    <property type="chains" value="A=23-128"/>
</dbReference>
<dbReference type="PDB" id="5L31">
    <property type="method" value="X-ray"/>
    <property type="resolution" value="2.40 A"/>
    <property type="chains" value="A/B/C/D=23-128"/>
</dbReference>
<dbReference type="PDB" id="5L32">
    <property type="method" value="X-ray"/>
    <property type="resolution" value="2.10 A"/>
    <property type="chains" value="A/B/C/D=23-128"/>
</dbReference>
<dbReference type="PDB" id="5L7D">
    <property type="method" value="X-ray"/>
    <property type="resolution" value="3.20 A"/>
    <property type="chains" value="A/B=23-127"/>
</dbReference>
<dbReference type="PDB" id="5L7I">
    <property type="method" value="X-ray"/>
    <property type="resolution" value="3.30 A"/>
    <property type="chains" value="A/B=23-127"/>
</dbReference>
<dbReference type="PDB" id="5MZJ">
    <property type="method" value="X-ray"/>
    <property type="resolution" value="2.00 A"/>
    <property type="chains" value="A=23-128"/>
</dbReference>
<dbReference type="PDB" id="5MZP">
    <property type="method" value="X-ray"/>
    <property type="resolution" value="2.10 A"/>
    <property type="chains" value="A=23-128"/>
</dbReference>
<dbReference type="PDB" id="5N2R">
    <property type="method" value="X-ray"/>
    <property type="resolution" value="2.80 A"/>
    <property type="chains" value="A=23-127"/>
</dbReference>
<dbReference type="PDB" id="5N2S">
    <property type="method" value="X-ray"/>
    <property type="resolution" value="3.30 A"/>
    <property type="chains" value="A=22-127"/>
</dbReference>
<dbReference type="PDB" id="5NDD">
    <property type="method" value="X-ray"/>
    <property type="resolution" value="2.80 A"/>
    <property type="chains" value="A=23-127"/>
</dbReference>
<dbReference type="PDB" id="5NDZ">
    <property type="method" value="X-ray"/>
    <property type="resolution" value="3.60 A"/>
    <property type="chains" value="A=23-127"/>
</dbReference>
<dbReference type="PDB" id="5NJ6">
    <property type="method" value="X-ray"/>
    <property type="resolution" value="4.00 A"/>
    <property type="chains" value="A=23-127"/>
</dbReference>
<dbReference type="PDB" id="5NLX">
    <property type="method" value="X-ray"/>
    <property type="resolution" value="2.14 A"/>
    <property type="chains" value="A=23-127"/>
</dbReference>
<dbReference type="PDB" id="5NM2">
    <property type="method" value="X-ray"/>
    <property type="resolution" value="1.95 A"/>
    <property type="chains" value="A=23-127"/>
</dbReference>
<dbReference type="PDB" id="5NM4">
    <property type="method" value="X-ray"/>
    <property type="resolution" value="1.70 A"/>
    <property type="chains" value="A=23-127"/>
</dbReference>
<dbReference type="PDB" id="5OLG">
    <property type="method" value="X-ray"/>
    <property type="resolution" value="1.87 A"/>
    <property type="chains" value="A=23-127"/>
</dbReference>
<dbReference type="PDB" id="5OLH">
    <property type="method" value="X-ray"/>
    <property type="resolution" value="2.60 A"/>
    <property type="chains" value="A=23-128"/>
</dbReference>
<dbReference type="PDB" id="5OLO">
    <property type="method" value="X-ray"/>
    <property type="resolution" value="3.10 A"/>
    <property type="chains" value="A=23-127"/>
</dbReference>
<dbReference type="PDB" id="5OLV">
    <property type="method" value="X-ray"/>
    <property type="resolution" value="2.00 A"/>
    <property type="chains" value="A=23-128"/>
</dbReference>
<dbReference type="PDB" id="5OLZ">
    <property type="method" value="X-ray"/>
    <property type="resolution" value="1.90 A"/>
    <property type="chains" value="A=23-128"/>
</dbReference>
<dbReference type="PDB" id="5OM1">
    <property type="method" value="X-ray"/>
    <property type="resolution" value="2.10 A"/>
    <property type="chains" value="A=23-128"/>
</dbReference>
<dbReference type="PDB" id="5OM4">
    <property type="method" value="X-ray"/>
    <property type="resolution" value="2.00 A"/>
    <property type="chains" value="A=23-128"/>
</dbReference>
<dbReference type="PDB" id="5TUD">
    <property type="method" value="X-ray"/>
    <property type="resolution" value="3.00 A"/>
    <property type="chains" value="A/D=23-128"/>
</dbReference>
<dbReference type="PDB" id="5TVN">
    <property type="method" value="X-ray"/>
    <property type="resolution" value="2.90 A"/>
    <property type="chains" value="A=23-128"/>
</dbReference>
<dbReference type="PDB" id="5UEN">
    <property type="method" value="X-ray"/>
    <property type="resolution" value="3.20 A"/>
    <property type="chains" value="A/B=23-127"/>
</dbReference>
<dbReference type="PDB" id="5UIG">
    <property type="method" value="X-ray"/>
    <property type="resolution" value="3.50 A"/>
    <property type="chains" value="A=27-128"/>
</dbReference>
<dbReference type="PDB" id="5UNF">
    <property type="method" value="X-ray"/>
    <property type="resolution" value="2.80 A"/>
    <property type="chains" value="A/B=23-128"/>
</dbReference>
<dbReference type="PDB" id="5UNG">
    <property type="method" value="X-ray"/>
    <property type="resolution" value="2.80 A"/>
    <property type="chains" value="B=23-128"/>
</dbReference>
<dbReference type="PDB" id="5UNH">
    <property type="method" value="X-ray"/>
    <property type="resolution" value="2.90 A"/>
    <property type="chains" value="A/B=23-128"/>
</dbReference>
<dbReference type="PDB" id="5UVI">
    <property type="method" value="X-ray"/>
    <property type="resolution" value="3.20 A"/>
    <property type="chains" value="A=27-128"/>
</dbReference>
<dbReference type="PDB" id="5VRA">
    <property type="method" value="X-ray"/>
    <property type="resolution" value="2.35 A"/>
    <property type="chains" value="A=23-128"/>
</dbReference>
<dbReference type="PDB" id="5WIU">
    <property type="method" value="X-ray"/>
    <property type="resolution" value="1.96 A"/>
    <property type="chains" value="A=24-128"/>
</dbReference>
<dbReference type="PDB" id="5WIV">
    <property type="method" value="X-ray"/>
    <property type="resolution" value="2.14 A"/>
    <property type="chains" value="A=24-128"/>
</dbReference>
<dbReference type="PDB" id="5XJM">
    <property type="method" value="X-ray"/>
    <property type="resolution" value="3.20 A"/>
    <property type="chains" value="A=23-128"/>
</dbReference>
<dbReference type="PDB" id="5XZI">
    <property type="method" value="X-ray"/>
    <property type="resolution" value="2.65 A"/>
    <property type="chains" value="A=23-128"/>
</dbReference>
<dbReference type="PDB" id="5XZJ">
    <property type="method" value="X-ray"/>
    <property type="resolution" value="1.98 A"/>
    <property type="chains" value="A/B/C/D=23-128"/>
</dbReference>
<dbReference type="PDB" id="5YM7">
    <property type="method" value="X-ray"/>
    <property type="resolution" value="1.56 A"/>
    <property type="chains" value="A=23-128"/>
</dbReference>
<dbReference type="PDB" id="5YO3">
    <property type="method" value="X-ray"/>
    <property type="resolution" value="1.70 A"/>
    <property type="chains" value="A=23-128"/>
</dbReference>
<dbReference type="PDB" id="5YO4">
    <property type="method" value="X-ray"/>
    <property type="resolution" value="1.37 A"/>
    <property type="chains" value="A=23-128"/>
</dbReference>
<dbReference type="PDB" id="5YO5">
    <property type="method" value="X-ray"/>
    <property type="resolution" value="2.20 A"/>
    <property type="chains" value="A/B/C/D/E/F/G/H=23-128"/>
</dbReference>
<dbReference type="PDB" id="5YO6">
    <property type="method" value="X-ray"/>
    <property type="resolution" value="1.20 A"/>
    <property type="chains" value="A=23-128"/>
</dbReference>
<dbReference type="PDB" id="6A93">
    <property type="method" value="X-ray"/>
    <property type="resolution" value="3.00 A"/>
    <property type="chains" value="A/B=23-62, A/B=88-128"/>
</dbReference>
<dbReference type="PDB" id="6A94">
    <property type="method" value="X-ray"/>
    <property type="resolution" value="2.90 A"/>
    <property type="chains" value="A/B=23-62, A/B=88-128"/>
</dbReference>
<dbReference type="PDB" id="6AI5">
    <property type="method" value="X-ray"/>
    <property type="resolution" value="1.81 A"/>
    <property type="chains" value="A/C/E/G=23-128"/>
</dbReference>
<dbReference type="PDB" id="6AK3">
    <property type="method" value="X-ray"/>
    <property type="resolution" value="2.90 A"/>
    <property type="chains" value="A/B=23-62, A/B=85-127"/>
</dbReference>
<dbReference type="PDB" id="6AQF">
    <property type="method" value="X-ray"/>
    <property type="resolution" value="2.51 A"/>
    <property type="chains" value="A=23-128"/>
</dbReference>
<dbReference type="PDB" id="6B73">
    <property type="method" value="X-ray"/>
    <property type="resolution" value="3.10 A"/>
    <property type="chains" value="A/B=23-128"/>
</dbReference>
<dbReference type="PDB" id="6BQG">
    <property type="method" value="X-ray"/>
    <property type="resolution" value="3.00 A"/>
    <property type="chains" value="A=23-128"/>
</dbReference>
<dbReference type="PDB" id="6BQH">
    <property type="method" value="X-ray"/>
    <property type="resolution" value="2.70 A"/>
    <property type="chains" value="A=23-128"/>
</dbReference>
<dbReference type="PDB" id="6C1Q">
    <property type="method" value="X-ray"/>
    <property type="resolution" value="2.90 A"/>
    <property type="chains" value="B=23-128"/>
</dbReference>
<dbReference type="PDB" id="6C1R">
    <property type="method" value="X-ray"/>
    <property type="resolution" value="2.20 A"/>
    <property type="chains" value="B=23-128"/>
</dbReference>
<dbReference type="PDB" id="6CBV">
    <property type="method" value="X-ray"/>
    <property type="resolution" value="1.87 A"/>
    <property type="chains" value="B=23-128"/>
</dbReference>
<dbReference type="PDB" id="6CC4">
    <property type="method" value="X-ray"/>
    <property type="resolution" value="3.50 A"/>
    <property type="chains" value="A=23-127"/>
</dbReference>
<dbReference type="PDB" id="6CMO">
    <property type="method" value="EM"/>
    <property type="resolution" value="4.50 A"/>
    <property type="chains" value="R=23-127"/>
</dbReference>
<dbReference type="PDB" id="6D32">
    <property type="method" value="X-ray"/>
    <property type="resolution" value="3.75 A"/>
    <property type="chains" value="A=23-127"/>
</dbReference>
<dbReference type="PDB" id="6D35">
    <property type="method" value="X-ray"/>
    <property type="resolution" value="3.90 A"/>
    <property type="chains" value="A=23-127"/>
</dbReference>
<dbReference type="PDB" id="6DHY">
    <property type="method" value="X-ray"/>
    <property type="resolution" value="2.22 A"/>
    <property type="chains" value="A/B/C/D=23-128"/>
</dbReference>
<dbReference type="PDB" id="6DHZ">
    <property type="method" value="X-ray"/>
    <property type="resolution" value="2.80 A"/>
    <property type="chains" value="A/B/C/D=23-128"/>
</dbReference>
<dbReference type="PDB" id="6DO1">
    <property type="method" value="X-ray"/>
    <property type="resolution" value="2.90 A"/>
    <property type="chains" value="A/B=24-122"/>
</dbReference>
<dbReference type="PDB" id="6DRX">
    <property type="method" value="X-ray"/>
    <property type="resolution" value="3.10 A"/>
    <property type="chains" value="A=23-123"/>
</dbReference>
<dbReference type="PDB" id="6DRY">
    <property type="method" value="X-ray"/>
    <property type="resolution" value="2.92 A"/>
    <property type="chains" value="A=23-123"/>
</dbReference>
<dbReference type="PDB" id="6DRZ">
    <property type="method" value="X-ray"/>
    <property type="resolution" value="3.10 A"/>
    <property type="chains" value="A=23-123"/>
</dbReference>
<dbReference type="PDB" id="6DS0">
    <property type="method" value="X-ray"/>
    <property type="resolution" value="3.19 A"/>
    <property type="chains" value="A=23-128"/>
</dbReference>
<dbReference type="PDB" id="6DY4">
    <property type="method" value="X-ray"/>
    <property type="resolution" value="1.90 A"/>
    <property type="chains" value="A/D=23-128"/>
</dbReference>
<dbReference type="PDB" id="6DY6">
    <property type="method" value="X-ray"/>
    <property type="resolution" value="1.80 A"/>
    <property type="chains" value="A/B=23-128"/>
</dbReference>
<dbReference type="PDB" id="6DY8">
    <property type="method" value="X-ray"/>
    <property type="resolution" value="1.90 A"/>
    <property type="chains" value="A/B/C/D=23-128"/>
</dbReference>
<dbReference type="PDB" id="6DYB">
    <property type="method" value="X-ray"/>
    <property type="resolution" value="2.75 A"/>
    <property type="chains" value="A/C=23-128"/>
</dbReference>
<dbReference type="PDB" id="6DYC">
    <property type="method" value="X-ray"/>
    <property type="resolution" value="1.33 A"/>
    <property type="chains" value="A/B=23-128"/>
</dbReference>
<dbReference type="PDB" id="6DYD">
    <property type="method" value="X-ray"/>
    <property type="resolution" value="1.72 A"/>
    <property type="chains" value="A/C=23-128"/>
</dbReference>
<dbReference type="PDB" id="6DYE">
    <property type="method" value="X-ray"/>
    <property type="resolution" value="2.25 A"/>
    <property type="chains" value="A/B=23-128"/>
</dbReference>
<dbReference type="PDB" id="6DYF">
    <property type="method" value="X-ray"/>
    <property type="resolution" value="1.10 A"/>
    <property type="chains" value="A/B=23-128"/>
</dbReference>
<dbReference type="PDB" id="6DYG">
    <property type="method" value="X-ray"/>
    <property type="resolution" value="1.49 A"/>
    <property type="chains" value="A/B=23-128"/>
</dbReference>
<dbReference type="PDB" id="6DYH">
    <property type="method" value="X-ray"/>
    <property type="resolution" value="1.83 A"/>
    <property type="chains" value="A/D=23-128"/>
</dbReference>
<dbReference type="PDB" id="6DYI">
    <property type="method" value="X-ray"/>
    <property type="resolution" value="1.96 A"/>
    <property type="chains" value="B=23-128"/>
</dbReference>
<dbReference type="PDB" id="6DYJ">
    <property type="method" value="X-ray"/>
    <property type="resolution" value="1.96 A"/>
    <property type="chains" value="A/C/E/G=23-128"/>
</dbReference>
<dbReference type="PDB" id="6DYK">
    <property type="method" value="X-ray"/>
    <property type="resolution" value="1.96 A"/>
    <property type="chains" value="A/C/E/G=23-128"/>
</dbReference>
<dbReference type="PDB" id="6DYL">
    <property type="method" value="X-ray"/>
    <property type="resolution" value="1.69 A"/>
    <property type="chains" value="A/C/E/G=23-128"/>
</dbReference>
<dbReference type="PDB" id="6G7O">
    <property type="method" value="X-ray"/>
    <property type="resolution" value="2.70 A"/>
    <property type="chains" value="A=23-127"/>
</dbReference>
<dbReference type="PDB" id="6GT3">
    <property type="method" value="X-ray"/>
    <property type="resolution" value="2.00 A"/>
    <property type="chains" value="A=23-127"/>
</dbReference>
<dbReference type="PDB" id="6IIU">
    <property type="method" value="X-ray"/>
    <property type="resolution" value="2.50 A"/>
    <property type="chains" value="A=23-128"/>
</dbReference>
<dbReference type="PDB" id="6IIV">
    <property type="method" value="X-ray"/>
    <property type="resolution" value="3.00 A"/>
    <property type="chains" value="A=23-128"/>
</dbReference>
<dbReference type="PDB" id="6IQL">
    <property type="method" value="X-ray"/>
    <property type="resolution" value="3.50 A"/>
    <property type="chains" value="A/B=24-127"/>
</dbReference>
<dbReference type="PDB" id="6JOD">
    <property type="method" value="X-ray"/>
    <property type="resolution" value="3.20 A"/>
    <property type="chains" value="C=23-62, C=89-128"/>
</dbReference>
<dbReference type="PDB" id="6JZH">
    <property type="method" value="X-ray"/>
    <property type="resolution" value="2.25 A"/>
    <property type="chains" value="A=23-128"/>
</dbReference>
<dbReference type="PDB" id="6KO5">
    <property type="method" value="X-ray"/>
    <property type="resolution" value="3.30 A"/>
    <property type="chains" value="A=23-128"/>
</dbReference>
<dbReference type="PDB" id="6LPJ">
    <property type="method" value="X-ray"/>
    <property type="resolution" value="1.80 A"/>
    <property type="chains" value="A=23-128"/>
</dbReference>
<dbReference type="PDB" id="6LPK">
    <property type="method" value="X-ray"/>
    <property type="resolution" value="1.80 A"/>
    <property type="chains" value="A=23-128"/>
</dbReference>
<dbReference type="PDB" id="6LPL">
    <property type="method" value="X-ray"/>
    <property type="resolution" value="2.00 A"/>
    <property type="chains" value="A=23-128"/>
</dbReference>
<dbReference type="PDB" id="6LW5">
    <property type="method" value="X-ray"/>
    <property type="resolution" value="2.80 A"/>
    <property type="chains" value="A=23-128"/>
</dbReference>
<dbReference type="PDB" id="6M97">
    <property type="method" value="X-ray"/>
    <property type="resolution" value="3.03 A"/>
    <property type="chains" value="A=23-128"/>
</dbReference>
<dbReference type="PDB" id="6M98">
    <property type="method" value="X-ray"/>
    <property type="resolution" value="3.21 A"/>
    <property type="chains" value="A=23-127"/>
</dbReference>
<dbReference type="PDB" id="6ME6">
    <property type="method" value="X-ray"/>
    <property type="resolution" value="2.80 A"/>
    <property type="chains" value="A/B=23-128"/>
</dbReference>
<dbReference type="PDB" id="6ME7">
    <property type="method" value="X-ray"/>
    <property type="resolution" value="3.20 A"/>
    <property type="chains" value="A/B=23-128"/>
</dbReference>
<dbReference type="PDB" id="6ME8">
    <property type="method" value="X-ray"/>
    <property type="resolution" value="3.10 A"/>
    <property type="chains" value="A/B=23-128"/>
</dbReference>
<dbReference type="PDB" id="6ME9">
    <property type="method" value="X-ray"/>
    <property type="resolution" value="3.30 A"/>
    <property type="chains" value="A/B=23-128"/>
</dbReference>
<dbReference type="PDB" id="6MH8">
    <property type="method" value="X-ray"/>
    <property type="resolution" value="4.20 A"/>
    <property type="chains" value="A=23-127"/>
</dbReference>
<dbReference type="PDB" id="6OS0">
    <property type="method" value="X-ray"/>
    <property type="resolution" value="2.90 A"/>
    <property type="chains" value="A=24-122"/>
</dbReference>
<dbReference type="PDB" id="6OS1">
    <property type="method" value="X-ray"/>
    <property type="resolution" value="2.79 A"/>
    <property type="chains" value="A=24-122"/>
</dbReference>
<dbReference type="PDB" id="6OS2">
    <property type="method" value="X-ray"/>
    <property type="resolution" value="2.70 A"/>
    <property type="chains" value="A=24-122"/>
</dbReference>
<dbReference type="PDB" id="6OT4">
    <property type="method" value="X-ray"/>
    <property type="resolution" value="1.40 A"/>
    <property type="chains" value="A/B/C/D=23-128"/>
</dbReference>
<dbReference type="PDB" id="6OT7">
    <property type="method" value="X-ray"/>
    <property type="resolution" value="1.85 A"/>
    <property type="chains" value="A/B/C/D=23-128"/>
</dbReference>
<dbReference type="PDB" id="6OT8">
    <property type="method" value="X-ray"/>
    <property type="resolution" value="1.50 A"/>
    <property type="chains" value="A=23-128"/>
</dbReference>
<dbReference type="PDB" id="6OT9">
    <property type="method" value="X-ray"/>
    <property type="resolution" value="2.40 A"/>
    <property type="chains" value="A/B/C/D=23-128"/>
</dbReference>
<dbReference type="PDB" id="6OVH">
    <property type="method" value="EM"/>
    <property type="resolution" value="2.60 A"/>
    <property type="chains" value="A/B/C/D/E/F/G/H/I/J/K/L=23-128"/>
</dbReference>
<dbReference type="PDB" id="6PS7">
    <property type="method" value="X-ray"/>
    <property type="resolution" value="1.85 A"/>
    <property type="chains" value="A=23-128"/>
</dbReference>
<dbReference type="PDB" id="6RZ4">
    <property type="method" value="X-ray"/>
    <property type="resolution" value="2.70 A"/>
    <property type="chains" value="A=22-127"/>
</dbReference>
<dbReference type="PDB" id="6RZ5">
    <property type="method" value="X-ray"/>
    <property type="resolution" value="2.53 A"/>
    <property type="chains" value="A/B=22-127"/>
</dbReference>
<dbReference type="PDB" id="6RZ6">
    <property type="method" value="X-ray"/>
    <property type="resolution" value="2.43 A"/>
    <property type="chains" value="A=23-128"/>
</dbReference>
<dbReference type="PDB" id="6RZ7">
    <property type="method" value="X-ray"/>
    <property type="resolution" value="2.43 A"/>
    <property type="chains" value="A=23-128"/>
</dbReference>
<dbReference type="PDB" id="6RZ8">
    <property type="method" value="X-ray"/>
    <property type="resolution" value="2.70 A"/>
    <property type="chains" value="A=23-128"/>
</dbReference>
<dbReference type="PDB" id="6RZ9">
    <property type="method" value="X-ray"/>
    <property type="resolution" value="2.73 A"/>
    <property type="chains" value="A=23-128"/>
</dbReference>
<dbReference type="PDB" id="6S0Q">
    <property type="method" value="X-ray"/>
    <property type="resolution" value="2.65 A"/>
    <property type="chains" value="A=23-127"/>
</dbReference>
<dbReference type="PDB" id="6UR8">
    <property type="method" value="EM"/>
    <property type="resolution" value="3.71 A"/>
    <property type="chains" value="A/D=23-123"/>
</dbReference>
<dbReference type="PDB" id="6USF">
    <property type="method" value="EM"/>
    <property type="resolution" value="3.87 A"/>
    <property type="chains" value="A/D=23-123"/>
</dbReference>
<dbReference type="PDB" id="6WGT">
    <property type="method" value="X-ray"/>
    <property type="resolution" value="3.40 A"/>
    <property type="chains" value="A/B/C=23-128"/>
</dbReference>
<dbReference type="PDB" id="6WH4">
    <property type="method" value="X-ray"/>
    <property type="resolution" value="3.40 A"/>
    <property type="chains" value="A/B/C=23-128"/>
</dbReference>
<dbReference type="PDB" id="6WHA">
    <property type="method" value="EM"/>
    <property type="resolution" value="3.36 A"/>
    <property type="chains" value="A=23-127"/>
</dbReference>
<dbReference type="PDB" id="6WQA">
    <property type="method" value="X-ray"/>
    <property type="resolution" value="2.00 A"/>
    <property type="chains" value="A=23-127"/>
</dbReference>
<dbReference type="PDB" id="6WW2">
    <property type="method" value="EM"/>
    <property type="resolution" value="3.70 A"/>
    <property type="chains" value="R=23-127"/>
</dbReference>
<dbReference type="PDB" id="6WWZ">
    <property type="method" value="EM"/>
    <property type="resolution" value="3.34 A"/>
    <property type="chains" value="R=22-127"/>
</dbReference>
<dbReference type="PDB" id="6WYU">
    <property type="method" value="X-ray"/>
    <property type="resolution" value="1.76 A"/>
    <property type="chains" value="A/B/C=23-128"/>
</dbReference>
<dbReference type="PDB" id="6WZ0">
    <property type="method" value="X-ray"/>
    <property type="resolution" value="1.70 A"/>
    <property type="chains" value="A/B/C=23-128"/>
</dbReference>
<dbReference type="PDB" id="6WZ1">
    <property type="method" value="X-ray"/>
    <property type="resolution" value="2.00 A"/>
    <property type="chains" value="A/B/C=23-128"/>
</dbReference>
<dbReference type="PDB" id="6WZ2">
    <property type="method" value="X-ray"/>
    <property type="resolution" value="2.00 A"/>
    <property type="chains" value="A/B/C=23-128"/>
</dbReference>
<dbReference type="PDB" id="6WZ3">
    <property type="method" value="X-ray"/>
    <property type="resolution" value="1.80 A"/>
    <property type="chains" value="A/B/C=23-128"/>
</dbReference>
<dbReference type="PDB" id="6WZ7">
    <property type="method" value="X-ray"/>
    <property type="resolution" value="2.30 A"/>
    <property type="chains" value="A/B/C=23-128"/>
</dbReference>
<dbReference type="PDB" id="6WZA">
    <property type="method" value="X-ray"/>
    <property type="resolution" value="2.50 A"/>
    <property type="chains" value="A/B/C=23-128"/>
</dbReference>
<dbReference type="PDB" id="6WZC">
    <property type="method" value="X-ray"/>
    <property type="resolution" value="2.19 A"/>
    <property type="chains" value="A=23-128"/>
</dbReference>
<dbReference type="PDB" id="6X7E">
    <property type="method" value="X-ray"/>
    <property type="resolution" value="2.00 A"/>
    <property type="chains" value="A/B/C=23-128"/>
</dbReference>
<dbReference type="PDB" id="6X8X">
    <property type="method" value="X-ray"/>
    <property type="resolution" value="2.50 A"/>
    <property type="chains" value="A=23-128"/>
</dbReference>
<dbReference type="PDB" id="6ZDR">
    <property type="method" value="X-ray"/>
    <property type="resolution" value="1.92 A"/>
    <property type="chains" value="A=23-127"/>
</dbReference>
<dbReference type="PDB" id="6ZDV">
    <property type="method" value="X-ray"/>
    <property type="resolution" value="2.13 A"/>
    <property type="chains" value="A=23-127"/>
</dbReference>
<dbReference type="PDB" id="7ARO">
    <property type="method" value="X-ray"/>
    <property type="resolution" value="3.12 A"/>
    <property type="chains" value="A=23-128"/>
</dbReference>
<dbReference type="PDB" id="7BW0">
    <property type="method" value="EM"/>
    <property type="resolution" value="3.90 A"/>
    <property type="chains" value="R=23-128"/>
</dbReference>
<dbReference type="PDB" id="7C61">
    <property type="method" value="X-ray"/>
    <property type="resolution" value="3.00 A"/>
    <property type="chains" value="A=23-128"/>
</dbReference>
<dbReference type="PDB" id="7C6A">
    <property type="method" value="X-ray"/>
    <property type="resolution" value="3.40 A"/>
    <property type="chains" value="A=23-128"/>
</dbReference>
<dbReference type="PDB" id="7CMU">
    <property type="method" value="EM"/>
    <property type="resolution" value="3.00 A"/>
    <property type="chains" value="R=23-128"/>
</dbReference>
<dbReference type="PDB" id="7CMV">
    <property type="method" value="EM"/>
    <property type="resolution" value="2.70 A"/>
    <property type="chains" value="R=23-128"/>
</dbReference>
<dbReference type="PDB" id="7DFP">
    <property type="method" value="X-ray"/>
    <property type="resolution" value="3.10 A"/>
    <property type="chains" value="A=24-62, A=89-128"/>
</dbReference>
<dbReference type="PDB" id="7E2X">
    <property type="method" value="EM"/>
    <property type="resolution" value="3.00 A"/>
    <property type="chains" value="R=23-128"/>
</dbReference>
<dbReference type="PDB" id="7E2Y">
    <property type="method" value="EM"/>
    <property type="resolution" value="3.00 A"/>
    <property type="chains" value="R=23-128"/>
</dbReference>
<dbReference type="PDB" id="7E2Z">
    <property type="method" value="EM"/>
    <property type="resolution" value="3.10 A"/>
    <property type="chains" value="R=23-128"/>
</dbReference>
<dbReference type="PDB" id="7E32">
    <property type="method" value="EM"/>
    <property type="resolution" value="2.90 A"/>
    <property type="chains" value="R=23-128"/>
</dbReference>
<dbReference type="PDB" id="7E33">
    <property type="method" value="EM"/>
    <property type="resolution" value="2.90 A"/>
    <property type="chains" value="R=23-128"/>
</dbReference>
<dbReference type="PDB" id="7EXD">
    <property type="method" value="EM"/>
    <property type="resolution" value="3.40 A"/>
    <property type="chains" value="R=23-127"/>
</dbReference>
<dbReference type="PDB" id="7EZC">
    <property type="method" value="X-ray"/>
    <property type="resolution" value="3.80 A"/>
    <property type="chains" value="A/B=23-123"/>
</dbReference>
<dbReference type="PDB" id="7F4D">
    <property type="method" value="EM"/>
    <property type="resolution" value="3.00 A"/>
    <property type="chains" value="R=3-127"/>
</dbReference>
<dbReference type="PDB" id="7F4F">
    <property type="method" value="EM"/>
    <property type="resolution" value="2.90 A"/>
    <property type="chains" value="R=3-127"/>
</dbReference>
<dbReference type="PDB" id="7F4H">
    <property type="method" value="EM"/>
    <property type="resolution" value="2.70 A"/>
    <property type="chains" value="R=3-127"/>
</dbReference>
<dbReference type="PDB" id="7F4I">
    <property type="method" value="EM"/>
    <property type="resolution" value="3.10 A"/>
    <property type="chains" value="R=3-127"/>
</dbReference>
<dbReference type="PDB" id="7F61">
    <property type="method" value="X-ray"/>
    <property type="resolution" value="2.60 A"/>
    <property type="chains" value="B=23-128"/>
</dbReference>
<dbReference type="PDB" id="7F83">
    <property type="method" value="X-ray"/>
    <property type="resolution" value="2.94 A"/>
    <property type="chains" value="A/B=23-128"/>
</dbReference>
<dbReference type="PDB" id="7F9Y">
    <property type="method" value="EM"/>
    <property type="resolution" value="2.90 A"/>
    <property type="chains" value="R=3-127"/>
</dbReference>
<dbReference type="PDB" id="7F9Z">
    <property type="method" value="EM"/>
    <property type="resolution" value="3.20 A"/>
    <property type="chains" value="R=3-127"/>
</dbReference>
<dbReference type="PDB" id="7JNI">
    <property type="method" value="X-ray"/>
    <property type="resolution" value="3.00 A"/>
    <property type="chains" value="A/B=23-128"/>
</dbReference>
<dbReference type="PDB" id="7JVR">
    <property type="method" value="EM"/>
    <property type="resolution" value="2.80 A"/>
    <property type="chains" value="R=23-127"/>
</dbReference>
<dbReference type="PDB" id="7KOO">
    <property type="method" value="EM"/>
    <property type="resolution" value="3.00 A"/>
    <property type="chains" value="A/B/C/D/E=23-127"/>
</dbReference>
<dbReference type="PDB" id="7KOQ">
    <property type="method" value="EM"/>
    <property type="resolution" value="3.60 A"/>
    <property type="chains" value="A/B/C/D/E=23-127"/>
</dbReference>
<dbReference type="PDB" id="7KOX">
    <property type="method" value="EM"/>
    <property type="resolution" value="2.70 A"/>
    <property type="chains" value="A/B/C/D/E=23-127"/>
</dbReference>
<dbReference type="PDB" id="7LR5">
    <property type="method" value="X-ray"/>
    <property type="resolution" value="1.70 A"/>
    <property type="chains" value="A/C=23-128"/>
</dbReference>
<dbReference type="PDB" id="7LRA">
    <property type="method" value="X-ray"/>
    <property type="resolution" value="1.70 A"/>
    <property type="chains" value="A/C=23-128"/>
</dbReference>
<dbReference type="PDB" id="7LRB">
    <property type="method" value="X-ray"/>
    <property type="resolution" value="1.78 A"/>
    <property type="chains" value="A/B=23-128"/>
</dbReference>
<dbReference type="PDB" id="7LRR">
    <property type="method" value="X-ray"/>
    <property type="resolution" value="1.89 A"/>
    <property type="chains" value="A/B=23-128"/>
</dbReference>
<dbReference type="PDB" id="7LRV">
    <property type="method" value="X-ray"/>
    <property type="resolution" value="1.40 A"/>
    <property type="chains" value="A/C=23-128"/>
</dbReference>
<dbReference type="PDB" id="7LSJ">
    <property type="method" value="X-ray"/>
    <property type="resolution" value="1.26 A"/>
    <property type="chains" value="A/C=23-128"/>
</dbReference>
<dbReference type="PDB" id="7LSL">
    <property type="method" value="X-ray"/>
    <property type="resolution" value="1.64 A"/>
    <property type="chains" value="A/C=23-128"/>
</dbReference>
<dbReference type="PDB" id="7LSN">
    <property type="method" value="X-ray"/>
    <property type="resolution" value="1.52 A"/>
    <property type="chains" value="A/C=23-128"/>
</dbReference>
<dbReference type="PDB" id="7LV1">
    <property type="method" value="X-ray"/>
    <property type="resolution" value="1.91 A"/>
    <property type="chains" value="A/C=23-128"/>
</dbReference>
<dbReference type="PDB" id="7LV4">
    <property type="method" value="X-ray"/>
    <property type="resolution" value="1.99 A"/>
    <property type="chains" value="A/C=23-128"/>
</dbReference>
<dbReference type="PDB" id="7MK4">
    <property type="method" value="X-ray"/>
    <property type="resolution" value="1.27 A"/>
    <property type="chains" value="A/B=23-128"/>
</dbReference>
<dbReference type="PDB" id="7MYZ">
    <property type="method" value="X-ray"/>
    <property type="resolution" value="3.40 A"/>
    <property type="chains" value="C/D=23-127"/>
</dbReference>
<dbReference type="PDB" id="7N4F">
    <property type="method" value="X-ray"/>
    <property type="resolution" value="1.80 A"/>
    <property type="chains" value="A/C=23-128"/>
</dbReference>
<dbReference type="PDB" id="7N4G">
    <property type="method" value="X-ray"/>
    <property type="resolution" value="1.93 A"/>
    <property type="chains" value="A/C=23-128"/>
</dbReference>
<dbReference type="PDB" id="7PP1">
    <property type="method" value="X-ray"/>
    <property type="resolution" value="2.78 A"/>
    <property type="chains" value="AAA=23-128"/>
</dbReference>
<dbReference type="PDB" id="7PX4">
    <property type="method" value="X-ray"/>
    <property type="resolution" value="2.25 A"/>
    <property type="chains" value="A=23-128"/>
</dbReference>
<dbReference type="PDB" id="7PYR">
    <property type="method" value="X-ray"/>
    <property type="resolution" value="2.60 A"/>
    <property type="chains" value="A=23-128"/>
</dbReference>
<dbReference type="PDB" id="7RM5">
    <property type="method" value="EM"/>
    <property type="resolution" value="2.79 A"/>
    <property type="chains" value="A=23-128"/>
</dbReference>
<dbReference type="PDB" id="7RWU">
    <property type="method" value="X-ray"/>
    <property type="resolution" value="1.80 A"/>
    <property type="chains" value="A=23-128"/>
</dbReference>
<dbReference type="PDB" id="7RWV">
    <property type="method" value="X-ray"/>
    <property type="resolution" value="2.20 A"/>
    <property type="chains" value="A/B/C/D=23-128"/>
</dbReference>
<dbReference type="PDB" id="7RWW">
    <property type="method" value="X-ray"/>
    <property type="resolution" value="1.70 A"/>
    <property type="chains" value="A/B/C/D=23-128"/>
</dbReference>
<dbReference type="PDB" id="7RWX">
    <property type="method" value="X-ray"/>
    <property type="resolution" value="1.60 A"/>
    <property type="chains" value="A/B=23-128"/>
</dbReference>
<dbReference type="PDB" id="7RWY">
    <property type="method" value="X-ray"/>
    <property type="resolution" value="2.20 A"/>
    <property type="chains" value="A/B/C/D/E/F=23-128"/>
</dbReference>
<dbReference type="PDB" id="7S8M">
    <property type="method" value="EM"/>
    <property type="resolution" value="2.54 A"/>
    <property type="chains" value="R=23-128"/>
</dbReference>
<dbReference type="PDB" id="7S8O">
    <property type="method" value="EM"/>
    <property type="resolution" value="2.58 A"/>
    <property type="chains" value="R=23-128"/>
</dbReference>
<dbReference type="PDB" id="7S8P">
    <property type="method" value="EM"/>
    <property type="resolution" value="2.60 A"/>
    <property type="chains" value="R=23-128"/>
</dbReference>
<dbReference type="PDB" id="7SBF">
    <property type="method" value="EM"/>
    <property type="resolution" value="2.90 A"/>
    <property type="chains" value="R=23-127"/>
</dbReference>
<dbReference type="PDB" id="7SQ0">
    <property type="method" value="EM"/>
    <property type="resolution" value="3.70 A"/>
    <property type="chains" value="C=22-127"/>
</dbReference>
<dbReference type="PDB" id="7SU2">
    <property type="method" value="X-ray"/>
    <property type="resolution" value="2.00 A"/>
    <property type="chains" value="A/C/D/G=23-128"/>
</dbReference>
<dbReference type="PDB" id="7T2G">
    <property type="method" value="EM"/>
    <property type="resolution" value="2.50 A"/>
    <property type="chains" value="R=23-127"/>
</dbReference>
<dbReference type="PDB" id="7T32">
    <property type="method" value="EM"/>
    <property type="resolution" value="3.40 A"/>
    <property type="chains" value="A=23-128"/>
</dbReference>
<dbReference type="PDB" id="7TEP">
    <property type="method" value="X-ray"/>
    <property type="resolution" value="2.70 A"/>
    <property type="chains" value="A/B/C/D=23-128"/>
</dbReference>
<dbReference type="PDB" id="7TX6">
    <property type="method" value="EM"/>
    <property type="resolution" value="3.30 A"/>
    <property type="chains" value="A=25-127"/>
</dbReference>
<dbReference type="PDB" id="7TX7">
    <property type="method" value="EM"/>
    <property type="resolution" value="3.80 A"/>
    <property type="chains" value="A=25-127"/>
</dbReference>
<dbReference type="PDB" id="7VOD">
    <property type="method" value="X-ray"/>
    <property type="resolution" value="3.30 A"/>
    <property type="chains" value="A=23-62, A=88-128"/>
</dbReference>
<dbReference type="PDB" id="7VOE">
    <property type="method" value="X-ray"/>
    <property type="resolution" value="2.90 A"/>
    <property type="chains" value="A=23-62, A=88-128"/>
</dbReference>
<dbReference type="PDB" id="7W0L">
    <property type="method" value="EM"/>
    <property type="resolution" value="3.57 A"/>
    <property type="chains" value="Q/R=23-127"/>
</dbReference>
<dbReference type="PDB" id="7W0M">
    <property type="method" value="EM"/>
    <property type="resolution" value="3.71 A"/>
    <property type="chains" value="R=23-127"/>
</dbReference>
<dbReference type="PDB" id="7W0N">
    <property type="method" value="EM"/>
    <property type="resolution" value="4.21 A"/>
    <property type="chains" value="Q/R=23-127"/>
</dbReference>
<dbReference type="PDB" id="7W0O">
    <property type="method" value="EM"/>
    <property type="resolution" value="3.78 A"/>
    <property type="chains" value="R=23-127"/>
</dbReference>
<dbReference type="PDB" id="7W0P">
    <property type="method" value="EM"/>
    <property type="resolution" value="3.16 A"/>
    <property type="chains" value="R=23-127"/>
</dbReference>
<dbReference type="PDB" id="7W53">
    <property type="method" value="EM"/>
    <property type="resolution" value="3.20 A"/>
    <property type="chains" value="R=23-127"/>
</dbReference>
<dbReference type="PDB" id="7W55">
    <property type="method" value="EM"/>
    <property type="resolution" value="2.80 A"/>
    <property type="chains" value="R=23-127"/>
</dbReference>
<dbReference type="PDB" id="7W56">
    <property type="method" value="EM"/>
    <property type="resolution" value="2.90 A"/>
    <property type="chains" value="R=23-127"/>
</dbReference>
<dbReference type="PDB" id="7W57">
    <property type="method" value="EM"/>
    <property type="resolution" value="3.20 A"/>
    <property type="chains" value="R=23-127"/>
</dbReference>
<dbReference type="PDB" id="7WC6">
    <property type="method" value="X-ray"/>
    <property type="resolution" value="2.60 A"/>
    <property type="chains" value="A=23-65, A=88-127"/>
</dbReference>
<dbReference type="PDB" id="7WC7">
    <property type="method" value="X-ray"/>
    <property type="resolution" value="2.60 A"/>
    <property type="chains" value="A=23-65, A=88-127"/>
</dbReference>
<dbReference type="PDB" id="7WC8">
    <property type="method" value="X-ray"/>
    <property type="resolution" value="2.45 A"/>
    <property type="chains" value="A=23-65, A=88-127"/>
</dbReference>
<dbReference type="PDB" id="7WC9">
    <property type="method" value="X-ray"/>
    <property type="resolution" value="2.50 A"/>
    <property type="chains" value="A=23-65, A=88-127"/>
</dbReference>
<dbReference type="PDB" id="7WJ5">
    <property type="method" value="EM"/>
    <property type="resolution" value="3.72 A"/>
    <property type="chains" value="R=23-127"/>
</dbReference>
<dbReference type="PDB" id="7WVV">
    <property type="method" value="EM"/>
    <property type="resolution" value="2.90 A"/>
    <property type="chains" value="R=23-127"/>
</dbReference>
<dbReference type="PDB" id="7WVW">
    <property type="method" value="EM"/>
    <property type="resolution" value="3.10 A"/>
    <property type="chains" value="R=23-127"/>
</dbReference>
<dbReference type="PDB" id="7WVX">
    <property type="method" value="EM"/>
    <property type="resolution" value="2.80 A"/>
    <property type="chains" value="R=23-127"/>
</dbReference>
<dbReference type="PDB" id="7WVY">
    <property type="method" value="EM"/>
    <property type="resolution" value="3.00 A"/>
    <property type="chains" value="R=23-127"/>
</dbReference>
<dbReference type="PDB" id="7X5H">
    <property type="method" value="EM"/>
    <property type="resolution" value="3.10 A"/>
    <property type="chains" value="R=23-127"/>
</dbReference>
<dbReference type="PDB" id="7XAY">
    <property type="method" value="X-ray"/>
    <property type="resolution" value="3.30 A"/>
    <property type="chains" value="A=23-127"/>
</dbReference>
<dbReference type="PDB" id="7XKI">
    <property type="method" value="EM"/>
    <property type="resolution" value="3.40 A"/>
    <property type="chains" value="A/B/C/D/E/F/G/H/I/J/K/L=23-128"/>
</dbReference>
<dbReference type="PDB" id="7XKT">
    <property type="method" value="EM"/>
    <property type="resolution" value="2.20 A"/>
    <property type="chains" value="A/B/C/D/E/F/G/H/I/J/K/L=23-128"/>
</dbReference>
<dbReference type="PDB" id="7XRZ">
    <property type="method" value="X-ray"/>
    <property type="resolution" value="2.10 A"/>
    <property type="chains" value="X/Y=24-128"/>
</dbReference>
<dbReference type="PDB" id="7XT8">
    <property type="method" value="EM"/>
    <property type="resolution" value="3.10 A"/>
    <property type="chains" value="R=23-127"/>
</dbReference>
<dbReference type="PDB" id="7XT9">
    <property type="method" value="EM"/>
    <property type="resolution" value="3.20 A"/>
    <property type="chains" value="R=23-127"/>
</dbReference>
<dbReference type="PDB" id="7XTA">
    <property type="method" value="EM"/>
    <property type="resolution" value="3.20 A"/>
    <property type="chains" value="R=23-127"/>
</dbReference>
<dbReference type="PDB" id="7XTB">
    <property type="method" value="EM"/>
    <property type="resolution" value="3.30 A"/>
    <property type="chains" value="R=23-127"/>
</dbReference>
<dbReference type="PDB" id="7XTC">
    <property type="method" value="EM"/>
    <property type="resolution" value="3.20 A"/>
    <property type="chains" value="R=23-127"/>
</dbReference>
<dbReference type="PDB" id="7XWO">
    <property type="method" value="EM"/>
    <property type="resolution" value="2.70 A"/>
    <property type="chains" value="B=23-127"/>
</dbReference>
<dbReference type="PDB" id="7XY6">
    <property type="method" value="EM"/>
    <property type="resolution" value="2.99 A"/>
    <property type="chains" value="R=23-127"/>
</dbReference>
<dbReference type="PDB" id="7XY7">
    <property type="method" value="EM"/>
    <property type="resolution" value="3.26 A"/>
    <property type="chains" value="R=23-127"/>
</dbReference>
<dbReference type="PDB" id="7XZ5">
    <property type="method" value="EM"/>
    <property type="resolution" value="3.10 A"/>
    <property type="chains" value="R=23-127"/>
</dbReference>
<dbReference type="PDB" id="7XZ6">
    <property type="method" value="EM"/>
    <property type="resolution" value="2.80 A"/>
    <property type="chains" value="R=23-127"/>
</dbReference>
<dbReference type="PDB" id="7Y12">
    <property type="method" value="EM"/>
    <property type="resolution" value="3.10 A"/>
    <property type="chains" value="R=23-127"/>
</dbReference>
<dbReference type="PDB" id="7Y13">
    <property type="method" value="EM"/>
    <property type="resolution" value="3.10 A"/>
    <property type="chains" value="R=23-127"/>
</dbReference>
<dbReference type="PDB" id="7Y14">
    <property type="method" value="EM"/>
    <property type="resolution" value="3.20 A"/>
    <property type="chains" value="R=23-127"/>
</dbReference>
<dbReference type="PDB" id="7Y15">
    <property type="method" value="EM"/>
    <property type="resolution" value="2.90 A"/>
    <property type="chains" value="R=23-127"/>
</dbReference>
<dbReference type="PDB" id="7YIT">
    <property type="method" value="X-ray"/>
    <property type="resolution" value="3.30 A"/>
    <property type="chains" value="E=23-127"/>
</dbReference>
<dbReference type="PDB" id="7YXA">
    <property type="method" value="X-ray"/>
    <property type="resolution" value="2.20 A"/>
    <property type="chains" value="A/B=23-128"/>
</dbReference>
<dbReference type="PDB" id="7ZI0">
    <property type="method" value="X-ray"/>
    <property type="resolution" value="3.00 A"/>
    <property type="chains" value="A/B=23-127"/>
</dbReference>
<dbReference type="PDB" id="7ZL9">
    <property type="method" value="X-ray"/>
    <property type="resolution" value="2.70 A"/>
    <property type="chains" value="A=23-128"/>
</dbReference>
<dbReference type="PDB" id="7ZLY">
    <property type="method" value="X-ray"/>
    <property type="resolution" value="2.70 A"/>
    <property type="chains" value="A=23-127"/>
</dbReference>
<dbReference type="PDB" id="8A2O">
    <property type="method" value="X-ray"/>
    <property type="resolution" value="3.45 A"/>
    <property type="chains" value="A=23-128"/>
</dbReference>
<dbReference type="PDB" id="8A2P">
    <property type="method" value="X-ray"/>
    <property type="resolution" value="3.50 A"/>
    <property type="chains" value="A=23-128"/>
</dbReference>
<dbReference type="PDB" id="8C9W">
    <property type="method" value="X-ray"/>
    <property type="resolution" value="2.11 A"/>
    <property type="chains" value="A=23-128"/>
</dbReference>
<dbReference type="PDB" id="8CIC">
    <property type="method" value="X-ray"/>
    <property type="resolution" value="2.10 A"/>
    <property type="chains" value="A=23-128"/>
</dbReference>
<dbReference type="PDB" id="8CU6">
    <property type="method" value="X-ray"/>
    <property type="resolution" value="2.80 A"/>
    <property type="chains" value="A=23-127"/>
</dbReference>
<dbReference type="PDB" id="8CU7">
    <property type="method" value="X-ray"/>
    <property type="resolution" value="2.05 A"/>
    <property type="chains" value="A=23-127"/>
</dbReference>
<dbReference type="PDB" id="8DEN">
    <property type="method" value="X-ray"/>
    <property type="resolution" value="1.69 A"/>
    <property type="chains" value="A/B/C/D=23-128"/>
</dbReference>
<dbReference type="PDB" id="8DEP">
    <property type="method" value="EM"/>
    <property type="resolution" value="3.60 A"/>
    <property type="chains" value="A=25-127"/>
</dbReference>
<dbReference type="PDB" id="8DJK">
    <property type="method" value="EM"/>
    <property type="resolution" value="3.33 A"/>
    <property type="chains" value="C=25-127"/>
</dbReference>
<dbReference type="PDB" id="8DJM">
    <property type="method" value="EM"/>
    <property type="resolution" value="3.23 A"/>
    <property type="chains" value="C=25-127"/>
</dbReference>
<dbReference type="PDB" id="8DR8">
    <property type="method" value="EM"/>
    <property type="resolution" value="3.04 A"/>
    <property type="chains" value="A/B/C/D/E=23-127"/>
</dbReference>
<dbReference type="PDB" id="8DRA">
    <property type="method" value="EM"/>
    <property type="resolution" value="3.98 A"/>
    <property type="chains" value="A/B=23-127"/>
</dbReference>
<dbReference type="PDB" id="8DRD">
    <property type="method" value="X-ray"/>
    <property type="resolution" value="1.89 A"/>
    <property type="chains" value="A/B=23-128"/>
</dbReference>
<dbReference type="PDB" id="8DRE">
    <property type="method" value="EM"/>
    <property type="resolution" value="3.18 A"/>
    <property type="chains" value="A/B/C/D/E=23-127"/>
</dbReference>
<dbReference type="PDB" id="8DRF">
    <property type="method" value="X-ray"/>
    <property type="resolution" value="1.70 A"/>
    <property type="chains" value="A=23-128"/>
</dbReference>
<dbReference type="PDB" id="8DRJ">
    <property type="method" value="X-ray"/>
    <property type="resolution" value="2.40 A"/>
    <property type="chains" value="A/C=23-128"/>
</dbReference>
<dbReference type="PDB" id="8DRK">
    <property type="method" value="EM"/>
    <property type="resolution" value="2.95 A"/>
    <property type="chains" value="A/B/C/D/E=23-127"/>
</dbReference>
<dbReference type="PDB" id="8DRL">
    <property type="method" value="X-ray"/>
    <property type="resolution" value="1.65 A"/>
    <property type="chains" value="A=23-128"/>
</dbReference>
<dbReference type="PDB" id="8DRM">
    <property type="method" value="X-ray"/>
    <property type="resolution" value="1.55 A"/>
    <property type="chains" value="A=23-128"/>
</dbReference>
<dbReference type="PDB" id="8DRN">
    <property type="method" value="EM"/>
    <property type="resolution" value="4.12 A"/>
    <property type="chains" value="A=23-127"/>
</dbReference>
<dbReference type="PDB" id="8DRO">
    <property type="method" value="EM"/>
    <property type="resolution" value="4.06 A"/>
    <property type="chains" value="B/C=23-127"/>
</dbReference>
<dbReference type="PDB" id="8DRQ">
    <property type="method" value="EM"/>
    <property type="resolution" value="4.16 A"/>
    <property type="chains" value="E=23-127"/>
</dbReference>
<dbReference type="PDB" id="8DS3">
    <property type="method" value="EM"/>
    <property type="resolution" value="3.07 A"/>
    <property type="chains" value="A/B/C/D/E=23-127"/>
</dbReference>
<dbReference type="PDB" id="8DS9">
    <property type="method" value="EM"/>
    <property type="resolution" value="3.17 A"/>
    <property type="chains" value="A/B/C/D/E=23-127"/>
</dbReference>
<dbReference type="PDB" id="8DSA">
    <property type="method" value="EM"/>
    <property type="resolution" value="3.48 A"/>
    <property type="chains" value="A/B/C/D/E=23-127"/>
</dbReference>
<dbReference type="PDB" id="8DU3">
    <property type="method" value="X-ray"/>
    <property type="resolution" value="2.50 A"/>
    <property type="chains" value="A=23-128"/>
</dbReference>
<dbReference type="PDB" id="8F74">
    <property type="method" value="EM"/>
    <property type="resolution" value="3.10 A"/>
    <property type="chains" value="A/B/C/D/E=23-127"/>
</dbReference>
<dbReference type="PDB" id="8F77">
    <property type="method" value="EM"/>
    <property type="resolution" value="3.15 A"/>
    <property type="chains" value="A/B/C/D/E=23-127"/>
</dbReference>
<dbReference type="PDB" id="8F79">
    <property type="method" value="EM"/>
    <property type="resolution" value="3.15 A"/>
    <property type="chains" value="A/B/C/D/E=23-127"/>
</dbReference>
<dbReference type="PDB" id="8F7B">
    <property type="method" value="EM"/>
    <property type="resolution" value="3.15 A"/>
    <property type="chains" value="A/B/C/D/E=23-127"/>
</dbReference>
<dbReference type="PDB" id="8F7C">
    <property type="method" value="EM"/>
    <property type="resolution" value="3.92 A"/>
    <property type="chains" value="A/B/C/D/E/F/G=23-127"/>
</dbReference>
<dbReference type="PDB" id="8F7D">
    <property type="method" value="EM"/>
    <property type="resolution" value="4.20 A"/>
    <property type="chains" value="A=23-127"/>
</dbReference>
<dbReference type="PDB" id="8F7E">
    <property type="method" value="EM"/>
    <property type="resolution" value="4.13 A"/>
    <property type="chains" value="B/C=23-127"/>
</dbReference>
<dbReference type="PDB" id="8F7J">
    <property type="method" value="EM"/>
    <property type="resolution" value="4.32 A"/>
    <property type="chains" value="E=23-127"/>
</dbReference>
<dbReference type="PDB" id="8FDO">
    <property type="method" value="X-ray"/>
    <property type="resolution" value="2.20 A"/>
    <property type="chains" value="C=23-127"/>
</dbReference>
<dbReference type="PDB" id="8FY8">
    <property type="method" value="EM"/>
    <property type="resolution" value="2.79 A"/>
    <property type="chains" value="R=13-127"/>
</dbReference>
<dbReference type="PDB" id="8FYE">
    <property type="method" value="EM"/>
    <property type="resolution" value="2.85 A"/>
    <property type="chains" value="R=13-127"/>
</dbReference>
<dbReference type="PDB" id="8FYL">
    <property type="method" value="EM"/>
    <property type="resolution" value="2.94 A"/>
    <property type="chains" value="R=13-127"/>
</dbReference>
<dbReference type="PDB" id="8FYN">
    <property type="method" value="EM"/>
    <property type="resolution" value="2.00 A"/>
    <property type="chains" value="A=23-127"/>
</dbReference>
<dbReference type="PDB" id="8FYT">
    <property type="method" value="EM"/>
    <property type="resolution" value="2.64 A"/>
    <property type="chains" value="R=13-127"/>
</dbReference>
<dbReference type="PDB" id="8FYX">
    <property type="method" value="EM"/>
    <property type="resolution" value="2.62 A"/>
    <property type="chains" value="R=13-127"/>
</dbReference>
<dbReference type="PDB" id="8GNE">
    <property type="method" value="X-ray"/>
    <property type="resolution" value="2.30 A"/>
    <property type="chains" value="A=23-128"/>
</dbReference>
<dbReference type="PDB" id="8GY7">
    <property type="method" value="EM"/>
    <property type="resolution" value="3.30 A"/>
    <property type="chains" value="R=23-128"/>
</dbReference>
<dbReference type="PDB" id="8H2G">
    <property type="method" value="EM"/>
    <property type="resolution" value="3.01 A"/>
    <property type="chains" value="A=23-127"/>
</dbReference>
<dbReference type="PDB" id="8HII">
    <property type="method" value="EM"/>
    <property type="resolution" value="3.57 A"/>
    <property type="chains" value="A=23-127"/>
</dbReference>
<dbReference type="PDB" id="8HIJ">
    <property type="method" value="EM"/>
    <property type="resolution" value="3.54 A"/>
    <property type="chains" value="A=23-127"/>
</dbReference>
<dbReference type="PDB" id="8HIK">
    <property type="method" value="EM"/>
    <property type="resolution" value="3.72 A"/>
    <property type="chains" value="A=23-127"/>
</dbReference>
<dbReference type="PDB" id="8HJ5">
    <property type="method" value="EM"/>
    <property type="resolution" value="3.00 A"/>
    <property type="chains" value="F=24-128"/>
</dbReference>
<dbReference type="PDB" id="8HN8">
    <property type="method" value="EM"/>
    <property type="resolution" value="3.00 A"/>
    <property type="chains" value="R=23-127"/>
</dbReference>
<dbReference type="PDB" id="8HNK">
    <property type="method" value="EM"/>
    <property type="resolution" value="3.01 A"/>
    <property type="chains" value="R=23-127"/>
</dbReference>
<dbReference type="PDB" id="8HNL">
    <property type="method" value="EM"/>
    <property type="resolution" value="2.98 A"/>
    <property type="chains" value="R=23-127"/>
</dbReference>
<dbReference type="PDB" id="8HNM">
    <property type="method" value="EM"/>
    <property type="resolution" value="2.94 A"/>
    <property type="chains" value="R=23-127"/>
</dbReference>
<dbReference type="PDB" id="8HNN">
    <property type="method" value="EM"/>
    <property type="resolution" value="3.60 A"/>
    <property type="chains" value="R=23-127"/>
</dbReference>
<dbReference type="PDB" id="8HOC">
    <property type="method" value="EM"/>
    <property type="resolution" value="3.00 A"/>
    <property type="chains" value="R=23-127"/>
</dbReference>
<dbReference type="PDB" id="8HQE">
    <property type="method" value="EM"/>
    <property type="resolution" value="2.97 A"/>
    <property type="chains" value="R=23-128"/>
</dbReference>
<dbReference type="PDB" id="8HQM">
    <property type="method" value="EM"/>
    <property type="resolution" value="2.95 A"/>
    <property type="chains" value="R=23-128"/>
</dbReference>
<dbReference type="PDB" id="8HQN">
    <property type="method" value="EM"/>
    <property type="resolution" value="3.00 A"/>
    <property type="chains" value="R=23-128"/>
</dbReference>
<dbReference type="PDB" id="8HS2">
    <property type="method" value="EM"/>
    <property type="resolution" value="3.08 A"/>
    <property type="chains" value="R=30-127"/>
</dbReference>
<dbReference type="PDB" id="8HS3">
    <property type="method" value="EM"/>
    <property type="resolution" value="3.14 A"/>
    <property type="chains" value="R=22-127"/>
</dbReference>
<dbReference type="PDB" id="8HSC">
    <property type="method" value="EM"/>
    <property type="resolution" value="3.22 A"/>
    <property type="chains" value="R=30-127"/>
</dbReference>
<dbReference type="PDB" id="8HVI">
    <property type="method" value="EM"/>
    <property type="resolution" value="3.04 A"/>
    <property type="chains" value="R=30-123"/>
</dbReference>
<dbReference type="PDB" id="8I7V">
    <property type="method" value="EM"/>
    <property type="resolution" value="2.77 A"/>
    <property type="chains" value="A=23-127"/>
</dbReference>
<dbReference type="PDB" id="8I7W">
    <property type="method" value="EM"/>
    <property type="resolution" value="3.39 A"/>
    <property type="chains" value="A=23-127"/>
</dbReference>
<dbReference type="PDB" id="8IBU">
    <property type="method" value="EM"/>
    <property type="resolution" value="3.51 A"/>
    <property type="chains" value="R=23-127"/>
</dbReference>
<dbReference type="PDB" id="8IBV">
    <property type="method" value="EM"/>
    <property type="resolution" value="3.19 A"/>
    <property type="chains" value="R=23-127"/>
</dbReference>
<dbReference type="PDB" id="8IHB">
    <property type="method" value="EM"/>
    <property type="resolution" value="2.85 A"/>
    <property type="chains" value="R=23-127"/>
</dbReference>
<dbReference type="PDB" id="8IHF">
    <property type="method" value="EM"/>
    <property type="resolution" value="2.97 A"/>
    <property type="chains" value="R=23-127"/>
</dbReference>
<dbReference type="PDB" id="8IHH">
    <property type="method" value="EM"/>
    <property type="resolution" value="3.06 A"/>
    <property type="chains" value="R=23-127"/>
</dbReference>
<dbReference type="PDB" id="8IHI">
    <property type="method" value="EM"/>
    <property type="resolution" value="3.11 A"/>
    <property type="chains" value="R=23-127"/>
</dbReference>
<dbReference type="PDB" id="8IHJ">
    <property type="method" value="EM"/>
    <property type="resolution" value="3.07 A"/>
    <property type="chains" value="R=23-127"/>
</dbReference>
<dbReference type="PDB" id="8IHK">
    <property type="method" value="EM"/>
    <property type="resolution" value="3.21 A"/>
    <property type="chains" value="R=23-127"/>
</dbReference>
<dbReference type="PDB" id="8IKJ">
    <property type="method" value="EM"/>
    <property type="resolution" value="3.20 A"/>
    <property type="chains" value="R=21-127"/>
</dbReference>
<dbReference type="PDB" id="8IRS">
    <property type="method" value="EM"/>
    <property type="resolution" value="3.00 A"/>
    <property type="chains" value="R=23-127"/>
</dbReference>
<dbReference type="PDB" id="8IRT">
    <property type="method" value="EM"/>
    <property type="resolution" value="2.70 A"/>
    <property type="chains" value="R=23-127"/>
</dbReference>
<dbReference type="PDB" id="8IRV">
    <property type="method" value="EM"/>
    <property type="resolution" value="3.10 A"/>
    <property type="chains" value="R=23-127"/>
</dbReference>
<dbReference type="PDB" id="8J7E">
    <property type="method" value="X-ray"/>
    <property type="resolution" value="2.80 A"/>
    <property type="chains" value="E/F=23-127"/>
</dbReference>
<dbReference type="PDB" id="8J9O">
    <property type="method" value="EM"/>
    <property type="resolution" value="3.40 A"/>
    <property type="chains" value="A=23-127"/>
</dbReference>
<dbReference type="PDB" id="8JH7">
    <property type="method" value="EM"/>
    <property type="resolution" value="3.20 A"/>
    <property type="chains" value="D=23-127"/>
</dbReference>
<dbReference type="PDB" id="8JHC">
    <property type="method" value="EM"/>
    <property type="resolution" value="3.30 A"/>
    <property type="chains" value="R=23-127"/>
</dbReference>
<dbReference type="PDB" id="8JJ8">
    <property type="method" value="EM"/>
    <property type="resolution" value="3.20 A"/>
    <property type="chains" value="F=23-65, F=77-128"/>
</dbReference>
<dbReference type="PDB" id="8JJL">
    <property type="method" value="EM"/>
    <property type="resolution" value="3.20 A"/>
    <property type="chains" value="A=23-65, A=78-128"/>
</dbReference>
<dbReference type="PDB" id="8JLJ">
    <property type="method" value="EM"/>
    <property type="resolution" value="3.10 A"/>
    <property type="chains" value="R=23-128"/>
</dbReference>
<dbReference type="PDB" id="8JLK">
    <property type="method" value="EM"/>
    <property type="resolution" value="3.22 A"/>
    <property type="chains" value="R=23-128"/>
</dbReference>
<dbReference type="PDB" id="8JLN">
    <property type="method" value="EM"/>
    <property type="resolution" value="3.24 A"/>
    <property type="chains" value="R=23-128"/>
</dbReference>
<dbReference type="PDB" id="8JLO">
    <property type="method" value="EM"/>
    <property type="resolution" value="3.52 A"/>
    <property type="chains" value="R=23-128"/>
</dbReference>
<dbReference type="PDB" id="8JLP">
    <property type="method" value="EM"/>
    <property type="resolution" value="3.23 A"/>
    <property type="chains" value="R=23-128"/>
</dbReference>
<dbReference type="PDB" id="8JLQ">
    <property type="method" value="EM"/>
    <property type="resolution" value="2.84 A"/>
    <property type="chains" value="R=23-128"/>
</dbReference>
<dbReference type="PDB" id="8JLR">
    <property type="method" value="EM"/>
    <property type="resolution" value="3.00 A"/>
    <property type="chains" value="R=23-128"/>
</dbReference>
<dbReference type="PDB" id="8JMT">
    <property type="method" value="EM"/>
    <property type="resolution" value="3.30 A"/>
    <property type="chains" value="A=24-127"/>
</dbReference>
<dbReference type="PDB" id="8JPN">
    <property type="method" value="EM"/>
    <property type="resolution" value="2.90 A"/>
    <property type="chains" value="R=23-127"/>
</dbReference>
<dbReference type="PDB" id="8JPP">
    <property type="method" value="EM"/>
    <property type="resolution" value="3.20 A"/>
    <property type="chains" value="R=23-127"/>
</dbReference>
<dbReference type="PDB" id="8JSO">
    <property type="method" value="EM"/>
    <property type="resolution" value="3.40 A"/>
    <property type="chains" value="R=23-128"/>
</dbReference>
<dbReference type="PDB" id="8JT6">
    <property type="method" value="EM"/>
    <property type="resolution" value="3.00 A"/>
    <property type="chains" value="R=23-127"/>
</dbReference>
<dbReference type="PDB" id="8JT8">
    <property type="method" value="X-ray"/>
    <property type="resolution" value="2.70 A"/>
    <property type="chains" value="A=23-62, A=88-128"/>
</dbReference>
<dbReference type="PDB" id="8K2W">
    <property type="method" value="EM"/>
    <property type="resolution" value="3.00 A"/>
    <property type="chains" value="R=23-127"/>
</dbReference>
<dbReference type="PDB" id="8K2X">
    <property type="method" value="EM"/>
    <property type="resolution" value="3.20 A"/>
    <property type="chains" value="R=23-127"/>
</dbReference>
<dbReference type="PDB" id="8K8J">
    <property type="method" value="EM"/>
    <property type="resolution" value="2.88 A"/>
    <property type="chains" value="R=23-127"/>
</dbReference>
<dbReference type="PDB" id="8K9K">
    <property type="method" value="EM"/>
    <property type="resolution" value="2.98 A"/>
    <property type="chains" value="R=23-128"/>
</dbReference>
<dbReference type="PDB" id="8K9L">
    <property type="method" value="EM"/>
    <property type="resolution" value="3.05 A"/>
    <property type="chains" value="R=23-127"/>
</dbReference>
<dbReference type="PDB" id="8KIG">
    <property type="method" value="EM"/>
    <property type="resolution" value="3.10 A"/>
    <property type="chains" value="R=23-127"/>
</dbReference>
<dbReference type="PDB" id="8PWN">
    <property type="method" value="X-ray"/>
    <property type="resolution" value="2.40 A"/>
    <property type="chains" value="A=23-123"/>
</dbReference>
<dbReference type="PDB" id="8RLN">
    <property type="method" value="X-ray"/>
    <property type="resolution" value="2.43 A"/>
    <property type="chains" value="A=23-127"/>
</dbReference>
<dbReference type="PDB" id="8RQQ">
    <property type="method" value="X-ray"/>
    <property type="resolution" value="2.37 A"/>
    <property type="chains" value="A=23-127"/>
</dbReference>
<dbReference type="PDB" id="8T1V">
    <property type="method" value="X-ray"/>
    <property type="resolution" value="2.60 A"/>
    <property type="chains" value="A=23-128"/>
</dbReference>
<dbReference type="PDB" id="8T1W">
    <property type="method" value="X-ray"/>
    <property type="resolution" value="3.49 A"/>
    <property type="chains" value="A=23-128"/>
</dbReference>
<dbReference type="PDB" id="8TB7">
    <property type="method" value="EM"/>
    <property type="resolution" value="2.94 A"/>
    <property type="chains" value="R=24-127"/>
</dbReference>
<dbReference type="PDB" id="8TF5">
    <property type="method" value="X-ray"/>
    <property type="resolution" value="2.10 A"/>
    <property type="chains" value="A=23-128"/>
</dbReference>
<dbReference type="PDB" id="8TH3">
    <property type="method" value="EM"/>
    <property type="resolution" value="3.00 A"/>
    <property type="chains" value="A/B=24-127"/>
</dbReference>
<dbReference type="PDB" id="8TH4">
    <property type="method" value="EM"/>
    <property type="resolution" value="3.30 A"/>
    <property type="chains" value="A=24-127"/>
</dbReference>
<dbReference type="PDB" id="8TS1">
    <property type="method" value="EM"/>
    <property type="resolution" value="2.92 A"/>
    <property type="chains" value="A/B/C/D/E=23-127"/>
</dbReference>
<dbReference type="PDB" id="8TS2">
    <property type="method" value="EM"/>
    <property type="resolution" value="2.95 A"/>
    <property type="chains" value="A/B/C/D/E=23-123"/>
</dbReference>
<dbReference type="PDB" id="8TS3">
    <property type="method" value="EM"/>
    <property type="resolution" value="3.11 A"/>
    <property type="chains" value="A/B/C/D/E=23-127"/>
</dbReference>
<dbReference type="PDB" id="8UHB">
    <property type="method" value="EM"/>
    <property type="resolution" value="3.35 A"/>
    <property type="chains" value="A=23-123"/>
</dbReference>
<dbReference type="PDB" id="8UT1">
    <property type="method" value="EM"/>
    <property type="resolution" value="2.30 A"/>
    <property type="chains" value="A/B/C/D/E=23-128"/>
</dbReference>
<dbReference type="PDB" id="8UTB">
    <property type="method" value="EM"/>
    <property type="resolution" value="2.30 A"/>
    <property type="chains" value="A/B/C/D/E=23-128"/>
</dbReference>
<dbReference type="PDB" id="8UZJ">
    <property type="method" value="EM"/>
    <property type="resolution" value="2.30 A"/>
    <property type="chains" value="A/B/C/D/E=23-128"/>
</dbReference>
<dbReference type="PDB" id="8V80">
    <property type="method" value="EM"/>
    <property type="resolution" value="2.34 A"/>
    <property type="chains" value="A/B/C/D/E=23-128"/>
</dbReference>
<dbReference type="PDB" id="8V82">
    <property type="method" value="EM"/>
    <property type="resolution" value="2.61 A"/>
    <property type="chains" value="A/B/C/D/E=23-128"/>
</dbReference>
<dbReference type="PDB" id="8V86">
    <property type="method" value="EM"/>
    <property type="resolution" value="2.47 A"/>
    <property type="chains" value="A/B/C/D/E=23-128"/>
</dbReference>
<dbReference type="PDB" id="8V88">
    <property type="method" value="EM"/>
    <property type="resolution" value="2.30 A"/>
    <property type="chains" value="A/B/C/D/E=23-128"/>
</dbReference>
<dbReference type="PDB" id="8V89">
    <property type="method" value="EM"/>
    <property type="resolution" value="2.53 A"/>
    <property type="chains" value="A/B/C/D/E=23-128"/>
</dbReference>
<dbReference type="PDB" id="8V8A">
    <property type="method" value="EM"/>
    <property type="resolution" value="2.19 A"/>
    <property type="chains" value="A/B/C/D/E=23-128"/>
</dbReference>
<dbReference type="PDB" id="8V8C">
    <property type="method" value="EM"/>
    <property type="resolution" value="3.29 A"/>
    <property type="chains" value="A/B/C/D/E=23-128"/>
</dbReference>
<dbReference type="PDB" id="8V8D">
    <property type="method" value="EM"/>
    <property type="resolution" value="3.31 A"/>
    <property type="chains" value="A/B/C/D/E=23-128"/>
</dbReference>
<dbReference type="PDB" id="8VHF">
    <property type="method" value="EM"/>
    <property type="resolution" value="3.51 A"/>
    <property type="chains" value="R=23-128"/>
</dbReference>
<dbReference type="PDB" id="8W8B">
    <property type="method" value="EM"/>
    <property type="resolution" value="3.00 A"/>
    <property type="chains" value="R=23-127"/>
</dbReference>
<dbReference type="PDB" id="8W8Q">
    <property type="method" value="EM"/>
    <property type="resolution" value="2.89 A"/>
    <property type="chains" value="C=23-128"/>
</dbReference>
<dbReference type="PDB" id="8WJX">
    <property type="method" value="EM"/>
    <property type="resolution" value="3.20 A"/>
    <property type="chains" value="R=23-127"/>
</dbReference>
<dbReference type="PDB" id="8WRZ">
    <property type="method" value="EM"/>
    <property type="resolution" value="3.60 A"/>
    <property type="chains" value="R=23-127"/>
</dbReference>
<dbReference type="PDB" id="8X2K">
    <property type="method" value="EM"/>
    <property type="resolution" value="3.03 A"/>
    <property type="chains" value="A=23-127"/>
</dbReference>
<dbReference type="PDB" id="8X5X">
    <property type="method" value="EM"/>
    <property type="resolution" value="3.50 A"/>
    <property type="chains" value="B=23-65, B=79-127"/>
</dbReference>
<dbReference type="PDB" id="8XML">
    <property type="method" value="EM"/>
    <property type="resolution" value="2.58 A"/>
    <property type="chains" value="R=23-127"/>
</dbReference>
<dbReference type="PDB" id="8XV2">
    <property type="method" value="EM"/>
    <property type="resolution" value="3.70 A"/>
    <property type="chains" value="A=23-128"/>
</dbReference>
<dbReference type="PDB" id="8XV5">
    <property type="method" value="EM"/>
    <property type="resolution" value="3.70 A"/>
    <property type="chains" value="A=23-128"/>
</dbReference>
<dbReference type="PDB" id="8XV9">
    <property type="method" value="EM"/>
    <property type="resolution" value="3.80 A"/>
    <property type="chains" value="A=23-128"/>
</dbReference>
<dbReference type="PDB" id="8XVJ">
    <property type="method" value="EM"/>
    <property type="resolution" value="3.26 A"/>
    <property type="chains" value="R=23-127"/>
</dbReference>
<dbReference type="PDB" id="8XVK">
    <property type="method" value="EM"/>
    <property type="resolution" value="3.21 A"/>
    <property type="chains" value="R=23-127"/>
</dbReference>
<dbReference type="PDB" id="8XVL">
    <property type="method" value="EM"/>
    <property type="resolution" value="3.22 A"/>
    <property type="chains" value="R=23-127"/>
</dbReference>
<dbReference type="PDB" id="8Y6J">
    <property type="method" value="EM"/>
    <property type="resolution" value="3.46 A"/>
    <property type="chains" value="A/B=23-127"/>
</dbReference>
<dbReference type="PDB" id="8Y6L">
    <property type="method" value="EM"/>
    <property type="resolution" value="3.40 A"/>
    <property type="chains" value="A/B=23-127"/>
</dbReference>
<dbReference type="PDB" id="8Y6M">
    <property type="method" value="EM"/>
    <property type="resolution" value="2.91 A"/>
    <property type="chains" value="A/B=23-127"/>
</dbReference>
<dbReference type="PDB" id="8Y6N">
    <property type="method" value="EM"/>
    <property type="resolution" value="3.40 A"/>
    <property type="chains" value="A/B=23-127"/>
</dbReference>
<dbReference type="PDB" id="8YNS">
    <property type="method" value="EM"/>
    <property type="resolution" value="3.33 A"/>
    <property type="chains" value="R=24-65, R=77-123"/>
</dbReference>
<dbReference type="PDB" id="8YNT">
    <property type="method" value="EM"/>
    <property type="resolution" value="3.43 A"/>
    <property type="chains" value="R=23-65, R=77-123"/>
</dbReference>
<dbReference type="PDB" id="8YRG">
    <property type="method" value="EM"/>
    <property type="resolution" value="3.14 A"/>
    <property type="chains" value="R=23-127"/>
</dbReference>
<dbReference type="PDB" id="8YZK">
    <property type="method" value="EM"/>
    <property type="resolution" value="3.40 A"/>
    <property type="chains" value="A/B=22-128"/>
</dbReference>
<dbReference type="PDB" id="8ZFK">
    <property type="method" value="EM"/>
    <property type="resolution" value="2.64 A"/>
    <property type="chains" value="A/B/C/D/E=23-127"/>
</dbReference>
<dbReference type="PDB" id="8ZFL">
    <property type="method" value="EM"/>
    <property type="resolution" value="2.61 A"/>
    <property type="chains" value="A/B/C/D/E=23-127"/>
</dbReference>
<dbReference type="PDB" id="8ZFM">
    <property type="method" value="EM"/>
    <property type="resolution" value="2.96 A"/>
    <property type="chains" value="A/B/C/D/E=23-127"/>
</dbReference>
<dbReference type="PDB" id="8ZMF">
    <property type="method" value="X-ray"/>
    <property type="resolution" value="3.60 A"/>
    <property type="chains" value="A=23-128"/>
</dbReference>
<dbReference type="PDB" id="8ZMG">
    <property type="method" value="X-ray"/>
    <property type="resolution" value="3.40 A"/>
    <property type="chains" value="A/B=23-62, A/B=88-128"/>
</dbReference>
<dbReference type="PDB" id="8ZPL">
    <property type="method" value="EM"/>
    <property type="resolution" value="3.01 A"/>
    <property type="chains" value="R=23-127"/>
</dbReference>
<dbReference type="PDB" id="8ZPM">
    <property type="method" value="EM"/>
    <property type="resolution" value="3.20 A"/>
    <property type="chains" value="R=23-127"/>
</dbReference>
<dbReference type="PDB" id="8ZPN">
    <property type="method" value="EM"/>
    <property type="resolution" value="3.31 A"/>
    <property type="chains" value="R=23-127"/>
</dbReference>
<dbReference type="PDB" id="8ZQE">
    <property type="method" value="EM"/>
    <property type="resolution" value="2.90 A"/>
    <property type="chains" value="R=3-127"/>
</dbReference>
<dbReference type="PDB" id="8ZSJ">
    <property type="method" value="EM"/>
    <property type="resolution" value="2.80 A"/>
    <property type="chains" value="R=23-127"/>
</dbReference>
<dbReference type="PDB" id="8ZSP">
    <property type="method" value="EM"/>
    <property type="resolution" value="3.14 A"/>
    <property type="chains" value="R=23-127"/>
</dbReference>
<dbReference type="PDB" id="8ZSS">
    <property type="method" value="EM"/>
    <property type="resolution" value="3.07 A"/>
    <property type="chains" value="R=23-127"/>
</dbReference>
<dbReference type="PDB" id="8ZSV">
    <property type="method" value="EM"/>
    <property type="resolution" value="2.96 A"/>
    <property type="chains" value="R=23-127"/>
</dbReference>
<dbReference type="PDB" id="9C3F">
    <property type="method" value="EM"/>
    <property type="resolution" value="3.78 A"/>
    <property type="chains" value="A=23-128"/>
</dbReference>
<dbReference type="PDB" id="9DX7">
    <property type="method" value="EM"/>
    <property type="resolution" value="3.30 A"/>
    <property type="chains" value="A/B/C/D=23-127"/>
</dbReference>
<dbReference type="PDB" id="9DXA">
    <property type="method" value="EM"/>
    <property type="resolution" value="3.40 A"/>
    <property type="chains" value="A/B/C/D=23-127"/>
</dbReference>
<dbReference type="PDB" id="9EAH">
    <property type="method" value="EM"/>
    <property type="resolution" value="3.10 A"/>
    <property type="chains" value="A/B=24-128"/>
</dbReference>
<dbReference type="PDB" id="9EAI">
    <property type="method" value="EM"/>
    <property type="resolution" value="3.10 A"/>
    <property type="chains" value="A/B=24-128"/>
</dbReference>
<dbReference type="PDB" id="9EAJ">
    <property type="method" value="EM"/>
    <property type="resolution" value="3.20 A"/>
    <property type="chains" value="A/B=24-128"/>
</dbReference>
<dbReference type="PDB" id="9GYO">
    <property type="method" value="EM"/>
    <property type="resolution" value="2.50 A"/>
    <property type="chains" value="R=23-128"/>
</dbReference>
<dbReference type="PDB" id="9IVK">
    <property type="method" value="EM"/>
    <property type="resolution" value="2.74 A"/>
    <property type="chains" value="A=25-127"/>
</dbReference>
<dbReference type="PDB" id="9IYA">
    <property type="method" value="EM"/>
    <property type="resolution" value="3.04 A"/>
    <property type="chains" value="A=23-127"/>
</dbReference>
<dbReference type="PDB" id="9IZF">
    <property type="method" value="EM"/>
    <property type="resolution" value="3.14 A"/>
    <property type="chains" value="R=23-127"/>
</dbReference>
<dbReference type="PDB" id="9IZG">
    <property type="method" value="EM"/>
    <property type="resolution" value="3.04 A"/>
    <property type="chains" value="R=23-127"/>
</dbReference>
<dbReference type="PDB" id="9IZH">
    <property type="method" value="EM"/>
    <property type="resolution" value="3.04 A"/>
    <property type="chains" value="R=23-127"/>
</dbReference>
<dbReference type="PDB" id="9J31">
    <property type="method" value="EM"/>
    <property type="resolution" value="3.05 A"/>
    <property type="chains" value="R=22-128"/>
</dbReference>
<dbReference type="PDB" id="9JKQ">
    <property type="method" value="EM"/>
    <property type="resolution" value="2.66 A"/>
    <property type="chains" value="R=23-128"/>
</dbReference>
<dbReference type="PDB" id="9JOZ">
    <property type="method" value="EM"/>
    <property type="resolution" value="2.94 A"/>
    <property type="chains" value="A=23-128"/>
</dbReference>
<dbReference type="PDB" id="9JRI">
    <property type="method" value="EM"/>
    <property type="resolution" value="3.43 A"/>
    <property type="chains" value="A=23-128"/>
</dbReference>
<dbReference type="PDB" id="9JRK">
    <property type="method" value="EM"/>
    <property type="resolution" value="3.44 A"/>
    <property type="chains" value="A=23-128"/>
</dbReference>
<dbReference type="PDB" id="9JRL">
    <property type="method" value="EM"/>
    <property type="resolution" value="3.25 A"/>
    <property type="chains" value="A=23-128"/>
</dbReference>
<dbReference type="PDB" id="9JRM">
    <property type="method" value="EM"/>
    <property type="resolution" value="3.34 A"/>
    <property type="chains" value="A=23-128"/>
</dbReference>
<dbReference type="PDB" id="9JRN">
    <property type="method" value="EM"/>
    <property type="resolution" value="3.74 A"/>
    <property type="chains" value="A=23-128"/>
</dbReference>
<dbReference type="PDB" id="9L3Z">
    <property type="method" value="EM"/>
    <property type="resolution" value="3.90 A"/>
    <property type="chains" value="A=23-127"/>
</dbReference>
<dbReference type="PDBsum" id="1APC"/>
<dbReference type="PDBsum" id="1LM3"/>
<dbReference type="PDBsum" id="1M6T"/>
<dbReference type="PDBsum" id="1QPU"/>
<dbReference type="PDBsum" id="1QQ3"/>
<dbReference type="PDBsum" id="256B"/>
<dbReference type="PDBsum" id="2BC5"/>
<dbReference type="PDBsum" id="2QLA"/>
<dbReference type="PDBsum" id="3C62"/>
<dbReference type="PDBsum" id="3C63"/>
<dbReference type="PDBsum" id="3DE8"/>
<dbReference type="PDBsum" id="3DE9"/>
<dbReference type="PDBsum" id="3FOO"/>
<dbReference type="PDBsum" id="3FOP"/>
<dbReference type="PDBsum" id="3HNI"/>
<dbReference type="PDBsum" id="3HNJ"/>
<dbReference type="PDBsum" id="3HNK"/>
<dbReference type="PDBsum" id="3HNL"/>
<dbReference type="PDBsum" id="3IQ5"/>
<dbReference type="PDBsum" id="3IQ6"/>
<dbReference type="PDBsum" id="3L1M"/>
<dbReference type="PDBsum" id="3M15"/>
<dbReference type="PDBsum" id="3M4B"/>
<dbReference type="PDBsum" id="3M4C"/>
<dbReference type="PDBsum" id="3M79"/>
<dbReference type="PDBsum" id="3NMI"/>
<dbReference type="PDBsum" id="3NMJ"/>
<dbReference type="PDBsum" id="3NMK"/>
<dbReference type="PDBsum" id="3TOL"/>
<dbReference type="PDBsum" id="3TOM"/>
<dbReference type="PDBsum" id="3U8P"/>
<dbReference type="PDBsum" id="4EA3"/>
<dbReference type="PDBsum" id="4EIY"/>
<dbReference type="PDBsum" id="4IAQ"/>
<dbReference type="PDBsum" id="4IAR"/>
<dbReference type="PDBsum" id="4IB4"/>
<dbReference type="PDBsum" id="4JE9"/>
<dbReference type="PDBsum" id="4JEA"/>
<dbReference type="PDBsum" id="4JEB"/>
<dbReference type="PDBsum" id="4JKV"/>
<dbReference type="PDBsum" id="4L6R"/>
<dbReference type="PDBsum" id="4N6H"/>
<dbReference type="PDBsum" id="4NC3"/>
<dbReference type="PDBsum" id="4NTJ"/>
<dbReference type="PDBsum" id="4O9R"/>
<dbReference type="PDBsum" id="4OR2"/>
<dbReference type="PDBsum" id="4PXZ"/>
<dbReference type="PDBsum" id="4PY0"/>
<dbReference type="PDBsum" id="4QIM"/>
<dbReference type="PDBsum" id="4QIN"/>
<dbReference type="PDBsum" id="4RWA"/>
<dbReference type="PDBsum" id="4RWD"/>
<dbReference type="PDBsum" id="4U9D"/>
<dbReference type="PDBsum" id="4U9E"/>
<dbReference type="PDBsum" id="4YAY"/>
<dbReference type="PDBsum" id="4Z34"/>
<dbReference type="PDBsum" id="4Z35"/>
<dbReference type="PDBsum" id="4Z36"/>
<dbReference type="PDBsum" id="4ZUD"/>
<dbReference type="PDBsum" id="5AWI"/>
<dbReference type="PDBsum" id="5BU7"/>
<dbReference type="PDBsum" id="5DHG"/>
<dbReference type="PDBsum" id="5DHH"/>
<dbReference type="PDBsum" id="5IU4"/>
<dbReference type="PDBsum" id="5IU7"/>
<dbReference type="PDBsum" id="5IU8"/>
<dbReference type="PDBsum" id="5IUA"/>
<dbReference type="PDBsum" id="5IUB"/>
<dbReference type="PDBsum" id="5JTB"/>
<dbReference type="PDBsum" id="5K2A"/>
<dbReference type="PDBsum" id="5K2B"/>
<dbReference type="PDBsum" id="5K2C"/>
<dbReference type="PDBsum" id="5K2D"/>
<dbReference type="PDBsum" id="5L31"/>
<dbReference type="PDBsum" id="5L32"/>
<dbReference type="PDBsum" id="5L7D"/>
<dbReference type="PDBsum" id="5L7I"/>
<dbReference type="PDBsum" id="5MZJ"/>
<dbReference type="PDBsum" id="5MZP"/>
<dbReference type="PDBsum" id="5N2R"/>
<dbReference type="PDBsum" id="5N2S"/>
<dbReference type="PDBsum" id="5NDD"/>
<dbReference type="PDBsum" id="5NDZ"/>
<dbReference type="PDBsum" id="5NJ6"/>
<dbReference type="PDBsum" id="5NLX"/>
<dbReference type="PDBsum" id="5NM2"/>
<dbReference type="PDBsum" id="5NM4"/>
<dbReference type="PDBsum" id="5OLG"/>
<dbReference type="PDBsum" id="5OLH"/>
<dbReference type="PDBsum" id="5OLO"/>
<dbReference type="PDBsum" id="5OLV"/>
<dbReference type="PDBsum" id="5OLZ"/>
<dbReference type="PDBsum" id="5OM1"/>
<dbReference type="PDBsum" id="5OM4"/>
<dbReference type="PDBsum" id="5TUD"/>
<dbReference type="PDBsum" id="5TVN"/>
<dbReference type="PDBsum" id="5UEN"/>
<dbReference type="PDBsum" id="5UIG"/>
<dbReference type="PDBsum" id="5UNF"/>
<dbReference type="PDBsum" id="5UNG"/>
<dbReference type="PDBsum" id="5UNH"/>
<dbReference type="PDBsum" id="5UVI"/>
<dbReference type="PDBsum" id="5VRA"/>
<dbReference type="PDBsum" id="5WIU"/>
<dbReference type="PDBsum" id="5WIV"/>
<dbReference type="PDBsum" id="5XJM"/>
<dbReference type="PDBsum" id="5XZI"/>
<dbReference type="PDBsum" id="5XZJ"/>
<dbReference type="PDBsum" id="5YM7"/>
<dbReference type="PDBsum" id="5YO3"/>
<dbReference type="PDBsum" id="5YO4"/>
<dbReference type="PDBsum" id="5YO5"/>
<dbReference type="PDBsum" id="5YO6"/>
<dbReference type="PDBsum" id="6A93"/>
<dbReference type="PDBsum" id="6A94"/>
<dbReference type="PDBsum" id="6AI5"/>
<dbReference type="PDBsum" id="6AK3"/>
<dbReference type="PDBsum" id="6AQF"/>
<dbReference type="PDBsum" id="6B73"/>
<dbReference type="PDBsum" id="6BQG"/>
<dbReference type="PDBsum" id="6BQH"/>
<dbReference type="PDBsum" id="6C1Q"/>
<dbReference type="PDBsum" id="6C1R"/>
<dbReference type="PDBsum" id="6CBV"/>
<dbReference type="PDBsum" id="6CC4"/>
<dbReference type="PDBsum" id="6CMO"/>
<dbReference type="PDBsum" id="6D32"/>
<dbReference type="PDBsum" id="6D35"/>
<dbReference type="PDBsum" id="6DHY"/>
<dbReference type="PDBsum" id="6DHZ"/>
<dbReference type="PDBsum" id="6DO1"/>
<dbReference type="PDBsum" id="6DRX"/>
<dbReference type="PDBsum" id="6DRY"/>
<dbReference type="PDBsum" id="6DRZ"/>
<dbReference type="PDBsum" id="6DS0"/>
<dbReference type="PDBsum" id="6DY4"/>
<dbReference type="PDBsum" id="6DY6"/>
<dbReference type="PDBsum" id="6DY8"/>
<dbReference type="PDBsum" id="6DYB"/>
<dbReference type="PDBsum" id="6DYC"/>
<dbReference type="PDBsum" id="6DYD"/>
<dbReference type="PDBsum" id="6DYE"/>
<dbReference type="PDBsum" id="6DYF"/>
<dbReference type="PDBsum" id="6DYG"/>
<dbReference type="PDBsum" id="6DYH"/>
<dbReference type="PDBsum" id="6DYI"/>
<dbReference type="PDBsum" id="6DYJ"/>
<dbReference type="PDBsum" id="6DYK"/>
<dbReference type="PDBsum" id="6DYL"/>
<dbReference type="PDBsum" id="6G7O"/>
<dbReference type="PDBsum" id="6GT3"/>
<dbReference type="PDBsum" id="6IIU"/>
<dbReference type="PDBsum" id="6IIV"/>
<dbReference type="PDBsum" id="6IQL"/>
<dbReference type="PDBsum" id="6JOD"/>
<dbReference type="PDBsum" id="6JZH"/>
<dbReference type="PDBsum" id="6KO5"/>
<dbReference type="PDBsum" id="6LPJ"/>
<dbReference type="PDBsum" id="6LPK"/>
<dbReference type="PDBsum" id="6LPL"/>
<dbReference type="PDBsum" id="6LW5"/>
<dbReference type="PDBsum" id="6M97"/>
<dbReference type="PDBsum" id="6M98"/>
<dbReference type="PDBsum" id="6ME6"/>
<dbReference type="PDBsum" id="6ME7"/>
<dbReference type="PDBsum" id="6ME8"/>
<dbReference type="PDBsum" id="6ME9"/>
<dbReference type="PDBsum" id="6MH8"/>
<dbReference type="PDBsum" id="6OS0"/>
<dbReference type="PDBsum" id="6OS1"/>
<dbReference type="PDBsum" id="6OS2"/>
<dbReference type="PDBsum" id="6OT4"/>
<dbReference type="PDBsum" id="6OT7"/>
<dbReference type="PDBsum" id="6OT8"/>
<dbReference type="PDBsum" id="6OT9"/>
<dbReference type="PDBsum" id="6OVH"/>
<dbReference type="PDBsum" id="6PS7"/>
<dbReference type="PDBsum" id="6RZ4"/>
<dbReference type="PDBsum" id="6RZ5"/>
<dbReference type="PDBsum" id="6RZ6"/>
<dbReference type="PDBsum" id="6RZ7"/>
<dbReference type="PDBsum" id="6RZ8"/>
<dbReference type="PDBsum" id="6RZ9"/>
<dbReference type="PDBsum" id="6S0Q"/>
<dbReference type="PDBsum" id="6UR8"/>
<dbReference type="PDBsum" id="6USF"/>
<dbReference type="PDBsum" id="6WGT"/>
<dbReference type="PDBsum" id="6WH4"/>
<dbReference type="PDBsum" id="6WHA"/>
<dbReference type="PDBsum" id="6WQA"/>
<dbReference type="PDBsum" id="6WW2"/>
<dbReference type="PDBsum" id="6WWZ"/>
<dbReference type="PDBsum" id="6WYU"/>
<dbReference type="PDBsum" id="6WZ0"/>
<dbReference type="PDBsum" id="6WZ1"/>
<dbReference type="PDBsum" id="6WZ2"/>
<dbReference type="PDBsum" id="6WZ3"/>
<dbReference type="PDBsum" id="6WZ7"/>
<dbReference type="PDBsum" id="6WZA"/>
<dbReference type="PDBsum" id="6WZC"/>
<dbReference type="PDBsum" id="6X7E"/>
<dbReference type="PDBsum" id="6X8X"/>
<dbReference type="PDBsum" id="6ZDR"/>
<dbReference type="PDBsum" id="6ZDV"/>
<dbReference type="PDBsum" id="7ARO"/>
<dbReference type="PDBsum" id="7BW0"/>
<dbReference type="PDBsum" id="7C61"/>
<dbReference type="PDBsum" id="7C6A"/>
<dbReference type="PDBsum" id="7CMU"/>
<dbReference type="PDBsum" id="7CMV"/>
<dbReference type="PDBsum" id="7DFP"/>
<dbReference type="PDBsum" id="7E2X"/>
<dbReference type="PDBsum" id="7E2Y"/>
<dbReference type="PDBsum" id="7E2Z"/>
<dbReference type="PDBsum" id="7E32"/>
<dbReference type="PDBsum" id="7E33"/>
<dbReference type="PDBsum" id="7EXD"/>
<dbReference type="PDBsum" id="7EZC"/>
<dbReference type="PDBsum" id="7F4D"/>
<dbReference type="PDBsum" id="7F4F"/>
<dbReference type="PDBsum" id="7F4H"/>
<dbReference type="PDBsum" id="7F4I"/>
<dbReference type="PDBsum" id="7F61"/>
<dbReference type="PDBsum" id="7F83"/>
<dbReference type="PDBsum" id="7F9Y"/>
<dbReference type="PDBsum" id="7F9Z"/>
<dbReference type="PDBsum" id="7JNI"/>
<dbReference type="PDBsum" id="7JVR"/>
<dbReference type="PDBsum" id="7KOO"/>
<dbReference type="PDBsum" id="7KOQ"/>
<dbReference type="PDBsum" id="7KOX"/>
<dbReference type="PDBsum" id="7LR5"/>
<dbReference type="PDBsum" id="7LRA"/>
<dbReference type="PDBsum" id="7LRB"/>
<dbReference type="PDBsum" id="7LRR"/>
<dbReference type="PDBsum" id="7LRV"/>
<dbReference type="PDBsum" id="7LSJ"/>
<dbReference type="PDBsum" id="7LSL"/>
<dbReference type="PDBsum" id="7LSN"/>
<dbReference type="PDBsum" id="7LV1"/>
<dbReference type="PDBsum" id="7LV4"/>
<dbReference type="PDBsum" id="7MK4"/>
<dbReference type="PDBsum" id="7MYZ"/>
<dbReference type="PDBsum" id="7N4F"/>
<dbReference type="PDBsum" id="7N4G"/>
<dbReference type="PDBsum" id="7PP1"/>
<dbReference type="PDBsum" id="7PX4"/>
<dbReference type="PDBsum" id="7PYR"/>
<dbReference type="PDBsum" id="7RM5"/>
<dbReference type="PDBsum" id="7RWU"/>
<dbReference type="PDBsum" id="7RWV"/>
<dbReference type="PDBsum" id="7RWW"/>
<dbReference type="PDBsum" id="7RWX"/>
<dbReference type="PDBsum" id="7RWY"/>
<dbReference type="PDBsum" id="7S8M"/>
<dbReference type="PDBsum" id="7S8O"/>
<dbReference type="PDBsum" id="7S8P"/>
<dbReference type="PDBsum" id="7SBF"/>
<dbReference type="PDBsum" id="7SQ0"/>
<dbReference type="PDBsum" id="7SU2"/>
<dbReference type="PDBsum" id="7T2G"/>
<dbReference type="PDBsum" id="7T32"/>
<dbReference type="PDBsum" id="7TEP"/>
<dbReference type="PDBsum" id="7TX6"/>
<dbReference type="PDBsum" id="7TX7"/>
<dbReference type="PDBsum" id="7VOD"/>
<dbReference type="PDBsum" id="7VOE"/>
<dbReference type="PDBsum" id="7W0L"/>
<dbReference type="PDBsum" id="7W0M"/>
<dbReference type="PDBsum" id="7W0N"/>
<dbReference type="PDBsum" id="7W0O"/>
<dbReference type="PDBsum" id="7W0P"/>
<dbReference type="PDBsum" id="7W53"/>
<dbReference type="PDBsum" id="7W55"/>
<dbReference type="PDBsum" id="7W56"/>
<dbReference type="PDBsum" id="7W57"/>
<dbReference type="PDBsum" id="7WC6"/>
<dbReference type="PDBsum" id="7WC7"/>
<dbReference type="PDBsum" id="7WC8"/>
<dbReference type="PDBsum" id="7WC9"/>
<dbReference type="PDBsum" id="7WJ5"/>
<dbReference type="PDBsum" id="7WVV"/>
<dbReference type="PDBsum" id="7WVW"/>
<dbReference type="PDBsum" id="7WVX"/>
<dbReference type="PDBsum" id="7WVY"/>
<dbReference type="PDBsum" id="7X5H"/>
<dbReference type="PDBsum" id="7XAY"/>
<dbReference type="PDBsum" id="7XKI"/>
<dbReference type="PDBsum" id="7XKT"/>
<dbReference type="PDBsum" id="7XRZ"/>
<dbReference type="PDBsum" id="7XT8"/>
<dbReference type="PDBsum" id="7XT9"/>
<dbReference type="PDBsum" id="7XTA"/>
<dbReference type="PDBsum" id="7XTB"/>
<dbReference type="PDBsum" id="7XTC"/>
<dbReference type="PDBsum" id="7XWO"/>
<dbReference type="PDBsum" id="7XY6"/>
<dbReference type="PDBsum" id="7XY7"/>
<dbReference type="PDBsum" id="7XZ5"/>
<dbReference type="PDBsum" id="7XZ6"/>
<dbReference type="PDBsum" id="7Y12"/>
<dbReference type="PDBsum" id="7Y13"/>
<dbReference type="PDBsum" id="7Y14"/>
<dbReference type="PDBsum" id="7Y15"/>
<dbReference type="PDBsum" id="7YIT"/>
<dbReference type="PDBsum" id="7YXA"/>
<dbReference type="PDBsum" id="7ZI0"/>
<dbReference type="PDBsum" id="7ZL9"/>
<dbReference type="PDBsum" id="7ZLY"/>
<dbReference type="PDBsum" id="8A2O"/>
<dbReference type="PDBsum" id="8A2P"/>
<dbReference type="PDBsum" id="8C9W"/>
<dbReference type="PDBsum" id="8CIC"/>
<dbReference type="PDBsum" id="8CU6"/>
<dbReference type="PDBsum" id="8CU7"/>
<dbReference type="PDBsum" id="8DEN"/>
<dbReference type="PDBsum" id="8DEP"/>
<dbReference type="PDBsum" id="8DJK"/>
<dbReference type="PDBsum" id="8DJM"/>
<dbReference type="PDBsum" id="8DR8"/>
<dbReference type="PDBsum" id="8DRA"/>
<dbReference type="PDBsum" id="8DRD"/>
<dbReference type="PDBsum" id="8DRE"/>
<dbReference type="PDBsum" id="8DRF"/>
<dbReference type="PDBsum" id="8DRJ"/>
<dbReference type="PDBsum" id="8DRK"/>
<dbReference type="PDBsum" id="8DRL"/>
<dbReference type="PDBsum" id="8DRM"/>
<dbReference type="PDBsum" id="8DRN"/>
<dbReference type="PDBsum" id="8DRO"/>
<dbReference type="PDBsum" id="8DRQ"/>
<dbReference type="PDBsum" id="8DS3"/>
<dbReference type="PDBsum" id="8DS9"/>
<dbReference type="PDBsum" id="8DSA"/>
<dbReference type="PDBsum" id="8DU3"/>
<dbReference type="PDBsum" id="8F74"/>
<dbReference type="PDBsum" id="8F77"/>
<dbReference type="PDBsum" id="8F79"/>
<dbReference type="PDBsum" id="8F7B"/>
<dbReference type="PDBsum" id="8F7C"/>
<dbReference type="PDBsum" id="8F7D"/>
<dbReference type="PDBsum" id="8F7E"/>
<dbReference type="PDBsum" id="8F7J"/>
<dbReference type="PDBsum" id="8FDO"/>
<dbReference type="PDBsum" id="8FY8"/>
<dbReference type="PDBsum" id="8FYE"/>
<dbReference type="PDBsum" id="8FYL"/>
<dbReference type="PDBsum" id="8FYN"/>
<dbReference type="PDBsum" id="8FYT"/>
<dbReference type="PDBsum" id="8FYX"/>
<dbReference type="PDBsum" id="8GNE"/>
<dbReference type="PDBsum" id="8GY7"/>
<dbReference type="PDBsum" id="8H2G"/>
<dbReference type="PDBsum" id="8HII"/>
<dbReference type="PDBsum" id="8HIJ"/>
<dbReference type="PDBsum" id="8HIK"/>
<dbReference type="PDBsum" id="8HJ5"/>
<dbReference type="PDBsum" id="8HN8"/>
<dbReference type="PDBsum" id="8HNK"/>
<dbReference type="PDBsum" id="8HNL"/>
<dbReference type="PDBsum" id="8HNM"/>
<dbReference type="PDBsum" id="8HNN"/>
<dbReference type="PDBsum" id="8HOC"/>
<dbReference type="PDBsum" id="8HQE"/>
<dbReference type="PDBsum" id="8HQM"/>
<dbReference type="PDBsum" id="8HQN"/>
<dbReference type="PDBsum" id="8HS2"/>
<dbReference type="PDBsum" id="8HS3"/>
<dbReference type="PDBsum" id="8HSC"/>
<dbReference type="PDBsum" id="8HVI"/>
<dbReference type="PDBsum" id="8I7V"/>
<dbReference type="PDBsum" id="8I7W"/>
<dbReference type="PDBsum" id="8IBU"/>
<dbReference type="PDBsum" id="8IBV"/>
<dbReference type="PDBsum" id="8IHB"/>
<dbReference type="PDBsum" id="8IHF"/>
<dbReference type="PDBsum" id="8IHH"/>
<dbReference type="PDBsum" id="8IHI"/>
<dbReference type="PDBsum" id="8IHJ"/>
<dbReference type="PDBsum" id="8IHK"/>
<dbReference type="PDBsum" id="8IKJ"/>
<dbReference type="PDBsum" id="8IRS"/>
<dbReference type="PDBsum" id="8IRT"/>
<dbReference type="PDBsum" id="8IRV"/>
<dbReference type="PDBsum" id="8J7E"/>
<dbReference type="PDBsum" id="8J9O"/>
<dbReference type="PDBsum" id="8JH7"/>
<dbReference type="PDBsum" id="8JHC"/>
<dbReference type="PDBsum" id="8JJ8"/>
<dbReference type="PDBsum" id="8JJL"/>
<dbReference type="PDBsum" id="8JLJ"/>
<dbReference type="PDBsum" id="8JLK"/>
<dbReference type="PDBsum" id="8JLN"/>
<dbReference type="PDBsum" id="8JLO"/>
<dbReference type="PDBsum" id="8JLP"/>
<dbReference type="PDBsum" id="8JLQ"/>
<dbReference type="PDBsum" id="8JLR"/>
<dbReference type="PDBsum" id="8JMT"/>
<dbReference type="PDBsum" id="8JPN"/>
<dbReference type="PDBsum" id="8JPP"/>
<dbReference type="PDBsum" id="8JSO"/>
<dbReference type="PDBsum" id="8JT6"/>
<dbReference type="PDBsum" id="8JT8"/>
<dbReference type="PDBsum" id="8K2W"/>
<dbReference type="PDBsum" id="8K2X"/>
<dbReference type="PDBsum" id="8K8J"/>
<dbReference type="PDBsum" id="8K9K"/>
<dbReference type="PDBsum" id="8K9L"/>
<dbReference type="PDBsum" id="8KIG"/>
<dbReference type="PDBsum" id="8PWN"/>
<dbReference type="PDBsum" id="8RLN"/>
<dbReference type="PDBsum" id="8RQQ"/>
<dbReference type="PDBsum" id="8T1V"/>
<dbReference type="PDBsum" id="8T1W"/>
<dbReference type="PDBsum" id="8TB7"/>
<dbReference type="PDBsum" id="8TF5"/>
<dbReference type="PDBsum" id="8TH3"/>
<dbReference type="PDBsum" id="8TH4"/>
<dbReference type="PDBsum" id="8TS1"/>
<dbReference type="PDBsum" id="8TS2"/>
<dbReference type="PDBsum" id="8TS3"/>
<dbReference type="PDBsum" id="8UHB"/>
<dbReference type="PDBsum" id="8UT1"/>
<dbReference type="PDBsum" id="8UTB"/>
<dbReference type="PDBsum" id="8UZJ"/>
<dbReference type="PDBsum" id="8V80"/>
<dbReference type="PDBsum" id="8V82"/>
<dbReference type="PDBsum" id="8V86"/>
<dbReference type="PDBsum" id="8V88"/>
<dbReference type="PDBsum" id="8V89"/>
<dbReference type="PDBsum" id="8V8A"/>
<dbReference type="PDBsum" id="8V8C"/>
<dbReference type="PDBsum" id="8V8D"/>
<dbReference type="PDBsum" id="8VHF"/>
<dbReference type="PDBsum" id="8W8B"/>
<dbReference type="PDBsum" id="8W8Q"/>
<dbReference type="PDBsum" id="8WJX"/>
<dbReference type="PDBsum" id="8WRZ"/>
<dbReference type="PDBsum" id="8X2K"/>
<dbReference type="PDBsum" id="8X5X"/>
<dbReference type="PDBsum" id="8XML"/>
<dbReference type="PDBsum" id="8XV2"/>
<dbReference type="PDBsum" id="8XV5"/>
<dbReference type="PDBsum" id="8XV9"/>
<dbReference type="PDBsum" id="8XVJ"/>
<dbReference type="PDBsum" id="8XVK"/>
<dbReference type="PDBsum" id="8XVL"/>
<dbReference type="PDBsum" id="8Y6J"/>
<dbReference type="PDBsum" id="8Y6L"/>
<dbReference type="PDBsum" id="8Y6M"/>
<dbReference type="PDBsum" id="8Y6N"/>
<dbReference type="PDBsum" id="8YNS"/>
<dbReference type="PDBsum" id="8YNT"/>
<dbReference type="PDBsum" id="8YRG"/>
<dbReference type="PDBsum" id="8YZK"/>
<dbReference type="PDBsum" id="8ZFK"/>
<dbReference type="PDBsum" id="8ZFL"/>
<dbReference type="PDBsum" id="8ZFM"/>
<dbReference type="PDBsum" id="8ZMF"/>
<dbReference type="PDBsum" id="8ZMG"/>
<dbReference type="PDBsum" id="8ZPL"/>
<dbReference type="PDBsum" id="8ZPM"/>
<dbReference type="PDBsum" id="8ZPN"/>
<dbReference type="PDBsum" id="8ZQE"/>
<dbReference type="PDBsum" id="8ZSJ"/>
<dbReference type="PDBsum" id="8ZSP"/>
<dbReference type="PDBsum" id="8ZSS"/>
<dbReference type="PDBsum" id="8ZSV"/>
<dbReference type="PDBsum" id="9C3F"/>
<dbReference type="PDBsum" id="9DX7"/>
<dbReference type="PDBsum" id="9DXA"/>
<dbReference type="PDBsum" id="9EAH"/>
<dbReference type="PDBsum" id="9EAI"/>
<dbReference type="PDBsum" id="9EAJ"/>
<dbReference type="PDBsum" id="9GYO"/>
<dbReference type="PDBsum" id="9IVK"/>
<dbReference type="PDBsum" id="9IYA"/>
<dbReference type="PDBsum" id="9IZF"/>
<dbReference type="PDBsum" id="9IZG"/>
<dbReference type="PDBsum" id="9IZH"/>
<dbReference type="PDBsum" id="9J31"/>
<dbReference type="PDBsum" id="9JKQ"/>
<dbReference type="PDBsum" id="9JOZ"/>
<dbReference type="PDBsum" id="9JRI"/>
<dbReference type="PDBsum" id="9JRK"/>
<dbReference type="PDBsum" id="9JRL"/>
<dbReference type="PDBsum" id="9JRM"/>
<dbReference type="PDBsum" id="9JRN"/>
<dbReference type="PDBsum" id="9L3Z"/>
<dbReference type="BMRB" id="P0ABE7"/>
<dbReference type="EMDB" id="EMD-20212"/>
<dbReference type="EMDB" id="EMD-27460"/>
<dbReference type="EMDB" id="EMD-27461"/>
<dbReference type="EMDB" id="EMD-27674"/>
<dbReference type="EMDB" id="EMD-27676"/>
<dbReference type="EMDB" id="EMD-27677"/>
<dbReference type="EMDB" id="EMD-27682"/>
<dbReference type="EMDB" id="EMD-27686"/>
<dbReference type="EMDB" id="EMD-27687"/>
<dbReference type="EMDB" id="EMD-28894"/>
<dbReference type="EMDB" id="EMD-28897"/>
<dbReference type="EMDB" id="EMD-28898"/>
<dbReference type="EMDB" id="EMD-28901"/>
<dbReference type="EMDB" id="EMD-28902"/>
<dbReference type="EMDB" id="EMD-31500"/>
<dbReference type="EMDB" id="EMD-35971"/>
<dbReference type="EMDB" id="EMD-37336"/>
<dbReference type="EMDB" id="EMD-38075"/>
<dbReference type="EMDB" id="EMD-38078"/>
<dbReference type="EMDB" id="EMD-38079"/>
<dbReference type="EMDB" id="EMD-41587"/>
<dbReference type="EMDB" id="EMD-41588"/>
<dbReference type="EMDB" id="EMD-41589"/>
<dbReference type="EMDB" id="EMD-42526"/>
<dbReference type="EMDB" id="EMD-42537"/>
<dbReference type="EMDB" id="EMD-42841"/>
<dbReference type="EMDB" id="EMD-43034"/>
<dbReference type="EMDB" id="EMD-45167"/>
<dbReference type="EMDB" id="EMD-60993"/>
<dbReference type="SMR" id="P0ABE7"/>
<dbReference type="IntAct" id="P0ABE7">
    <property type="interactions" value="26"/>
</dbReference>
<dbReference type="STRING" id="585034.ECIAI1_4468"/>
<dbReference type="DrugBank" id="DB02182">
    <property type="generic name" value="Hybrid Between B and C Type Hemes (Protoporphyrin Ixcontaining Fe)"/>
</dbReference>
<dbReference type="DrugBank" id="DB08440">
    <property type="generic name" value="N-1,10-phenanthrolin-5-ylacetamide"/>
</dbReference>
<dbReference type="ABCD" id="P0ABE7">
    <property type="antibodies" value="2 sequenced antibodies"/>
</dbReference>
<dbReference type="eggNOG" id="COG3783">
    <property type="taxonomic scope" value="Bacteria"/>
</dbReference>
<dbReference type="OMA" id="ATRNENH"/>
<dbReference type="BioCyc" id="MetaCyc:CYTOCHROME-B562-MONOMER"/>
<dbReference type="EvolutionaryTrace" id="P0ABE7"/>
<dbReference type="GO" id="GO:0042597">
    <property type="term" value="C:periplasmic space"/>
    <property type="evidence" value="ECO:0007669"/>
    <property type="project" value="UniProtKB-SubCell"/>
</dbReference>
<dbReference type="GO" id="GO:0009055">
    <property type="term" value="F:electron transfer activity"/>
    <property type="evidence" value="ECO:0007669"/>
    <property type="project" value="InterPro"/>
</dbReference>
<dbReference type="GO" id="GO:0020037">
    <property type="term" value="F:heme binding"/>
    <property type="evidence" value="ECO:0007669"/>
    <property type="project" value="InterPro"/>
</dbReference>
<dbReference type="GO" id="GO:0005506">
    <property type="term" value="F:iron ion binding"/>
    <property type="evidence" value="ECO:0007669"/>
    <property type="project" value="InterPro"/>
</dbReference>
<dbReference type="GO" id="GO:0022900">
    <property type="term" value="P:electron transport chain"/>
    <property type="evidence" value="ECO:0007669"/>
    <property type="project" value="InterPro"/>
</dbReference>
<dbReference type="Gene3D" id="1.20.120.10">
    <property type="entry name" value="Cytochrome c/b562"/>
    <property type="match status" value="1"/>
</dbReference>
<dbReference type="InterPro" id="IPR009155">
    <property type="entry name" value="Cyt_b562"/>
</dbReference>
<dbReference type="InterPro" id="IPR010980">
    <property type="entry name" value="Cyt_c/b562"/>
</dbReference>
<dbReference type="NCBIfam" id="NF011632">
    <property type="entry name" value="PRK15058.1"/>
    <property type="match status" value="1"/>
</dbReference>
<dbReference type="Pfam" id="PF07361">
    <property type="entry name" value="Cytochrom_B562"/>
    <property type="match status" value="1"/>
</dbReference>
<dbReference type="PIRSF" id="PIRSF000029">
    <property type="entry name" value="Cytochrome_b562"/>
    <property type="match status" value="1"/>
</dbReference>
<dbReference type="SUPFAM" id="SSF47175">
    <property type="entry name" value="Cytochromes"/>
    <property type="match status" value="1"/>
</dbReference>
<sequence>MRKSLLAILAVSSLVFSSASFAADLEDNMETLNDNLKVIEKADNAAQVKDALTKMRAAALDAQKATPPKLEDKSPDSPEMKDFRHGFDILVGQIDDALKLANEGKVKEAQAAAEQLKTTRNAYHQKYR</sequence>
<proteinExistence type="evidence at protein level"/>
<gene>
    <name type="primary">cybC</name>
</gene>
<name>C562_ECOLX</name>
<keyword id="KW-0002">3D-structure</keyword>
<keyword id="KW-0903">Direct protein sequencing</keyword>
<keyword id="KW-0249">Electron transport</keyword>
<keyword id="KW-0349">Heme</keyword>
<keyword id="KW-0408">Iron</keyword>
<keyword id="KW-0479">Metal-binding</keyword>
<keyword id="KW-0574">Periplasm</keyword>
<keyword id="KW-0732">Signal</keyword>
<keyword id="KW-0813">Transport</keyword>
<feature type="signal peptide" evidence="4">
    <location>
        <begin position="1"/>
        <end position="22"/>
    </location>
</feature>
<feature type="chain" id="PRO_0000003640" description="Soluble cytochrome b562">
    <location>
        <begin position="23"/>
        <end position="128"/>
    </location>
</feature>
<feature type="region of interest" description="Disordered" evidence="1">
    <location>
        <begin position="60"/>
        <end position="82"/>
    </location>
</feature>
<feature type="compositionally biased region" description="Basic and acidic residues" evidence="1">
    <location>
        <begin position="69"/>
        <end position="82"/>
    </location>
</feature>
<feature type="binding site" description="axial binding residue">
    <location>
        <position position="29"/>
    </location>
    <ligand>
        <name>heme b</name>
        <dbReference type="ChEBI" id="CHEBI:60344"/>
    </ligand>
    <ligandPart>
        <name>Fe</name>
        <dbReference type="ChEBI" id="CHEBI:18248"/>
    </ligandPart>
</feature>
<feature type="binding site" description="axial binding residue">
    <location>
        <position position="124"/>
    </location>
    <ligand>
        <name>heme b</name>
        <dbReference type="ChEBI" id="CHEBI:60344"/>
    </ligand>
    <ligandPart>
        <name>Fe</name>
        <dbReference type="ChEBI" id="CHEBI:18248"/>
    </ligandPart>
</feature>
<feature type="helix" evidence="8">
    <location>
        <begin position="25"/>
        <end position="41"/>
    </location>
</feature>
<feature type="helix" evidence="8">
    <location>
        <begin position="45"/>
        <end position="62"/>
    </location>
</feature>
<feature type="turn" evidence="6">
    <location>
        <begin position="63"/>
        <end position="65"/>
    </location>
</feature>
<feature type="helix" evidence="8">
    <location>
        <begin position="68"/>
        <end position="70"/>
    </location>
</feature>
<feature type="strand" evidence="7">
    <location>
        <begin position="71"/>
        <end position="73"/>
    </location>
</feature>
<feature type="strand" evidence="9">
    <location>
        <begin position="75"/>
        <end position="77"/>
    </location>
</feature>
<feature type="helix" evidence="8">
    <location>
        <begin position="78"/>
        <end position="102"/>
    </location>
</feature>
<feature type="helix" evidence="8">
    <location>
        <begin position="106"/>
        <end position="114"/>
    </location>
</feature>
<feature type="helix" evidence="8">
    <location>
        <begin position="117"/>
        <end position="127"/>
    </location>
</feature>
<protein>
    <recommendedName>
        <fullName>Soluble cytochrome b562</fullName>
        <shortName>Cytochrome b-562</shortName>
    </recommendedName>
</protein>
<accession>P0ABE7</accession>
<accession>P00192</accession>
<accession>P76805</accession>
<accession>Q8XCE3</accession>
<comment type="function">
    <text>Electron-transport protein of unknown function.</text>
</comment>
<comment type="cofactor">
    <cofactor>
        <name>heme b</name>
        <dbReference type="ChEBI" id="CHEBI:60344"/>
    </cofactor>
    <text>Binds 1 heme b (iron(II)-protoporphyrin IX) group per molecule.</text>
</comment>
<comment type="biophysicochemical properties">
    <redoxPotential>
        <text>E(0) is about +180 mV.</text>
    </redoxPotential>
</comment>
<comment type="subunit">
    <text evidence="3">Monomer.</text>
</comment>
<comment type="subcellular location">
    <subcellularLocation>
        <location evidence="2">Periplasm</location>
    </subcellularLocation>
</comment>
<comment type="similarity">
    <text evidence="5">Belongs to the cytochrome b562 family.</text>
</comment>
<comment type="caution">
    <text evidence="5">In strains K / NM522 and K12 / MG1655 the cybC gene has a 26 bp deletion and lacks the first 7 amino acids. It is not translated in those strains.</text>
</comment>
<comment type="sequence caution" evidence="5">
    <conflict type="erroneous initiation">
        <sequence resource="EMBL-CDS" id="AAA97133"/>
    </conflict>
</comment>
<reference key="1">
    <citation type="journal article" date="1991" name="Eur. J. Biochem.">
        <title>Cloning and expression of the gene encoding the soluble cytochrome b562 of Escherichia coli.</title>
        <authorList>
            <person name="Nikkila H."/>
            <person name="Gennis R.B."/>
            <person name="Sligar S.G."/>
        </authorList>
    </citation>
    <scope>NUCLEOTIDE SEQUENCE [GENOMIC DNA]</scope>
    <scope>SUBCELLULAR LOCATION</scope>
    <source>
        <strain>B</strain>
    </source>
</reference>
<reference key="2">
    <citation type="journal article" date="1993" name="Biochim. Biophys. Acta">
        <title>PCR cloning, sequence analysis and expression of the cybC genes encoding soluble cytochrome b-562 from Escherichia coli B strain OP7 and K strain NM522.</title>
        <authorList>
            <person name="Trower M.K."/>
        </authorList>
    </citation>
    <scope>NUCLEOTIDE SEQUENCE [GENOMIC DNA]</scope>
    <source>
        <strain>B / OP7</strain>
        <strain>K / NM522</strain>
    </source>
</reference>
<reference key="3">
    <citation type="journal article" date="1968" name="Biochem. Biophys. Res. Commun.">
        <title>The amino acid sequence of cytochrome b562 of Escherichia coli.</title>
        <authorList>
            <person name="Itagaki E."/>
            <person name="Hager L.P."/>
        </authorList>
    </citation>
    <scope>PROTEIN SEQUENCE OF 23-128</scope>
    <source>
        <strain>B</strain>
    </source>
</reference>
<reference key="4">
    <citation type="journal article" date="1979" name="J. Biol. Chem.">
        <title>The structure of cytochrome b562 from Escherichia coli at 2.5-A resolution.</title>
        <authorList>
            <person name="Mathews F.S."/>
            <person name="Bethge P.H."/>
            <person name="Czerwinski E.W."/>
        </authorList>
    </citation>
    <scope>X-RAY CRYSTALLOGRAPHY (2.5 ANGSTROMS)</scope>
    <scope>SUBUNIT</scope>
</reference>
<reference key="5">
    <citation type="journal article" date="1981" name="J. Mol. Biol.">
        <title>Improvement of the 2.5-A resolution model of cytochrome b562 by redetermining the primary structure and using molecular graphics.</title>
        <authorList>
            <person name="Lederer F."/>
            <person name="Glatigny A."/>
            <person name="Bethge P.H."/>
            <person name="Bellamy H.D."/>
            <person name="Mathews F.S."/>
        </authorList>
    </citation>
    <scope>X-RAY CRYSTALLOGRAPHY (2.5 ANGSTROMS)</scope>
    <scope>SEQUENCE REVISION</scope>
</reference>
<reference key="6">
    <citation type="journal article" date="1995" name="J. Mol. Biol.">
        <title>Refined structure of cytochrome b562 from Escherichia coli at 1.4-A resolution.</title>
        <authorList>
            <person name="Hamada K."/>
            <person name="Bethge P.H."/>
            <person name="Mathews F.S."/>
        </authorList>
    </citation>
    <scope>X-RAY CRYSTALLOGRAPHY (1.4 ANGSTROMS)</scope>
</reference>
<reference key="7">
    <citation type="journal article" date="2002" name="Biochemistry">
        <title>A multigeneration analysis of cytochrome b562 redox variants: evolutionary strategies for modulating redox potential revealed using a library approach.</title>
        <authorList>
            <person name="Springs S.L."/>
            <person name="Bass S.E."/>
            <person name="Bowman G."/>
            <person name="Nodelman I."/>
            <person name="Schutt C.E."/>
            <person name="McLendon G.L."/>
        </authorList>
    </citation>
    <scope>X-RAY CRYSTALLOGRAPHY (2.7 ANGSTROMS) OF F83I/F87Y/R128L VARIANT</scope>
</reference>
<reference key="8">
    <citation type="journal article" date="1999" name="Biochemistry">
        <title>The solution structure of oxidized Escherichia coli cytochrome b562.</title>
        <authorList>
            <person name="Arnesano F."/>
            <person name="Banci L."/>
            <person name="Bertini I."/>
            <person name="Faraone-Mennella J."/>
            <person name="Rosato A."/>
            <person name="Barker P.D."/>
            <person name="Fersht A.R."/>
        </authorList>
    </citation>
    <scope>STRUCTURE BY NMR</scope>
</reference>
<reference key="9">
    <citation type="journal article" date="2001" name="Biochemistry">
        <title>(15)N backbone dynamics of ferricytochrome b(562): comparison with the reduced protein and the R98C variant.</title>
        <authorList>
            <person name="Assfalg M."/>
            <person name="Banci L."/>
            <person name="Bertini I."/>
            <person name="Ciofi-Baffoni S."/>
            <person name="Barker P.D."/>
        </authorList>
    </citation>
    <scope>STRUCTURE BY NMR</scope>
</reference>
<organism>
    <name type="scientific">Escherichia coli</name>
    <dbReference type="NCBI Taxonomy" id="562"/>
    <lineage>
        <taxon>Bacteria</taxon>
        <taxon>Pseudomonadati</taxon>
        <taxon>Pseudomonadota</taxon>
        <taxon>Gammaproteobacteria</taxon>
        <taxon>Enterobacterales</taxon>
        <taxon>Enterobacteriaceae</taxon>
        <taxon>Escherichia</taxon>
    </lineage>
</organism>
<evidence type="ECO:0000256" key="1">
    <source>
        <dbReference type="SAM" id="MobiDB-lite"/>
    </source>
</evidence>
<evidence type="ECO:0000269" key="2">
    <source>
    </source>
</evidence>
<evidence type="ECO:0000269" key="3">
    <source>
    </source>
</evidence>
<evidence type="ECO:0000269" key="4">
    <source>
    </source>
</evidence>
<evidence type="ECO:0000305" key="5"/>
<evidence type="ECO:0007829" key="6">
    <source>
        <dbReference type="PDB" id="5TUD"/>
    </source>
</evidence>
<evidence type="ECO:0007829" key="7">
    <source>
        <dbReference type="PDB" id="5YO4"/>
    </source>
</evidence>
<evidence type="ECO:0007829" key="8">
    <source>
        <dbReference type="PDB" id="6DYF"/>
    </source>
</evidence>
<evidence type="ECO:0007829" key="9">
    <source>
        <dbReference type="PDB" id="7SU2"/>
    </source>
</evidence>